<name>LRP1_HUMAN</name>
<dbReference type="EMBL" id="X13916">
    <property type="protein sequence ID" value="CAA32112.1"/>
    <property type="molecule type" value="mRNA"/>
</dbReference>
<dbReference type="EMBL" id="AF058427">
    <property type="protein sequence ID" value="AAC64265.1"/>
    <property type="molecule type" value="Genomic_DNA"/>
</dbReference>
<dbReference type="EMBL" id="DQ314873">
    <property type="protein sequence ID" value="ABC40732.1"/>
    <property type="molecule type" value="Genomic_DNA"/>
</dbReference>
<dbReference type="EMBL" id="AC023237">
    <property type="status" value="NOT_ANNOTATED_CDS"/>
    <property type="molecule type" value="Genomic_DNA"/>
</dbReference>
<dbReference type="EMBL" id="AC137628">
    <property type="status" value="NOT_ANNOTATED_CDS"/>
    <property type="molecule type" value="Genomic_DNA"/>
</dbReference>
<dbReference type="EMBL" id="AC137834">
    <property type="status" value="NOT_ANNOTATED_CDS"/>
    <property type="molecule type" value="Genomic_DNA"/>
</dbReference>
<dbReference type="EMBL" id="BC045107">
    <property type="protein sequence ID" value="AAH45107.1"/>
    <property type="molecule type" value="mRNA"/>
</dbReference>
<dbReference type="EMBL" id="X15424">
    <property type="protein sequence ID" value="CAA33464.1"/>
    <property type="molecule type" value="Genomic_DNA"/>
</dbReference>
<dbReference type="EMBL" id="Y18524">
    <property type="protein sequence ID" value="CAD57169.1"/>
    <property type="molecule type" value="Genomic_DNA"/>
</dbReference>
<dbReference type="CCDS" id="CCDS8932.1">
    <molecule id="Q07954-1"/>
</dbReference>
<dbReference type="PIR" id="S02392">
    <property type="entry name" value="S02392"/>
</dbReference>
<dbReference type="RefSeq" id="NP_002323.2">
    <molecule id="Q07954-1"/>
    <property type="nucleotide sequence ID" value="NM_002332.3"/>
</dbReference>
<dbReference type="PDB" id="1CR8">
    <property type="method" value="NMR"/>
    <property type="chains" value="A=1059-1100"/>
</dbReference>
<dbReference type="PDB" id="1D2L">
    <property type="method" value="NMR"/>
    <property type="chains" value="A=851-893"/>
</dbReference>
<dbReference type="PDB" id="1J8E">
    <property type="method" value="X-ray"/>
    <property type="resolution" value="1.85 A"/>
    <property type="chains" value="A=1011-1054"/>
</dbReference>
<dbReference type="PDB" id="2FYJ">
    <property type="method" value="NMR"/>
    <property type="chains" value="A=932-1013"/>
</dbReference>
<dbReference type="PDB" id="2FYL">
    <property type="method" value="NMR"/>
    <property type="chains" value="B=932-1013"/>
</dbReference>
<dbReference type="PDB" id="2KNX">
    <property type="method" value="NMR"/>
    <property type="chains" value="A=2770-2817"/>
</dbReference>
<dbReference type="PDB" id="2KNY">
    <property type="method" value="NMR"/>
    <property type="chains" value="A=2770-2817"/>
</dbReference>
<dbReference type="PDBsum" id="1CR8"/>
<dbReference type="PDBsum" id="1D2L"/>
<dbReference type="PDBsum" id="1J8E"/>
<dbReference type="PDBsum" id="2FYJ"/>
<dbReference type="PDBsum" id="2FYL"/>
<dbReference type="PDBsum" id="2KNX"/>
<dbReference type="PDBsum" id="2KNY"/>
<dbReference type="SMR" id="Q07954"/>
<dbReference type="BioGRID" id="110215">
    <property type="interactions" value="237"/>
</dbReference>
<dbReference type="ComplexPortal" id="CPX-4310">
    <property type="entry name" value="Prolow-density lipoprotein receptor-related protein 1 complex"/>
</dbReference>
<dbReference type="CORUM" id="Q07954"/>
<dbReference type="DIP" id="DIP-50613N"/>
<dbReference type="ELM" id="Q07954"/>
<dbReference type="FunCoup" id="Q07954">
    <property type="interactions" value="717"/>
</dbReference>
<dbReference type="IntAct" id="Q07954">
    <property type="interactions" value="109"/>
</dbReference>
<dbReference type="MINT" id="Q07954"/>
<dbReference type="STRING" id="9606.ENSP00000243077"/>
<dbReference type="ChEMBL" id="CHEMBL4630884"/>
<dbReference type="DrugBank" id="DB00025">
    <property type="generic name" value="Antihemophilic factor, human recombinant"/>
</dbReference>
<dbReference type="DrugBank" id="DB00100">
    <property type="generic name" value="Coagulation Factor IX (Recombinant)"/>
</dbReference>
<dbReference type="DrugBank" id="DB13152">
    <property type="generic name" value="Coagulation Factor IX Human"/>
</dbReference>
<dbReference type="DrugBank" id="DB06245">
    <property type="generic name" value="Lanoteplase"/>
</dbReference>
<dbReference type="DrugBank" id="DB13998">
    <property type="generic name" value="Lonoctocog alfa"/>
</dbReference>
<dbReference type="DrugBank" id="DB13999">
    <property type="generic name" value="Moroctocog alfa"/>
</dbReference>
<dbReference type="DrugBank" id="DB13133">
    <property type="generic name" value="Von Willebrand factor human"/>
</dbReference>
<dbReference type="TCDB" id="9.B.87.1.16">
    <property type="family name" value="the selenoprotein p receptor (selp-receptor) family"/>
</dbReference>
<dbReference type="CarbonylDB" id="Q07954"/>
<dbReference type="GlyConnect" id="1638">
    <property type="glycosylation" value="61 N-Linked glycans (38 sites), 1 O-Linked glycan (1 site)"/>
</dbReference>
<dbReference type="GlyCosmos" id="Q07954">
    <property type="glycosylation" value="70 sites, 64 glycans"/>
</dbReference>
<dbReference type="GlyGen" id="Q07954">
    <property type="glycosylation" value="82 sites, 169 N-linked glycans (48 sites), 5 O-linked glycans (19 sites)"/>
</dbReference>
<dbReference type="iPTMnet" id="Q07954"/>
<dbReference type="MetOSite" id="Q07954"/>
<dbReference type="PhosphoSitePlus" id="Q07954"/>
<dbReference type="SwissPalm" id="Q07954"/>
<dbReference type="BioMuta" id="LRP1"/>
<dbReference type="DMDM" id="317373384"/>
<dbReference type="CPTAC" id="CPTAC-1617"/>
<dbReference type="CPTAC" id="CPTAC-2222"/>
<dbReference type="CPTAC" id="CPTAC-2223"/>
<dbReference type="jPOST" id="Q07954"/>
<dbReference type="MassIVE" id="Q07954"/>
<dbReference type="PaxDb" id="9606-ENSP00000243077"/>
<dbReference type="PeptideAtlas" id="Q07954"/>
<dbReference type="ProteomicsDB" id="58559">
    <molecule id="Q07954-1"/>
</dbReference>
<dbReference type="ProteomicsDB" id="69639"/>
<dbReference type="Pumba" id="Q07954"/>
<dbReference type="Antibodypedia" id="4353">
    <property type="antibodies" value="1134 antibodies from 43 providers"/>
</dbReference>
<dbReference type="DNASU" id="4035"/>
<dbReference type="Ensembl" id="ENST00000243077.8">
    <molecule id="Q07954-1"/>
    <property type="protein sequence ID" value="ENSP00000243077.3"/>
    <property type="gene ID" value="ENSG00000123384.14"/>
</dbReference>
<dbReference type="Ensembl" id="ENST00000338962.8">
    <molecule id="Q07954-2"/>
    <property type="protein sequence ID" value="ENSP00000341264.4"/>
    <property type="gene ID" value="ENSG00000123384.14"/>
</dbReference>
<dbReference type="GeneID" id="4035"/>
<dbReference type="KEGG" id="hsa:4035"/>
<dbReference type="MANE-Select" id="ENST00000243077.8">
    <property type="protein sequence ID" value="ENSP00000243077.3"/>
    <property type="RefSeq nucleotide sequence ID" value="NM_002332.3"/>
    <property type="RefSeq protein sequence ID" value="NP_002323.2"/>
</dbReference>
<dbReference type="UCSC" id="uc001snd.4">
    <molecule id="Q07954-1"/>
    <property type="organism name" value="human"/>
</dbReference>
<dbReference type="AGR" id="HGNC:6692"/>
<dbReference type="CTD" id="4035"/>
<dbReference type="DisGeNET" id="4035"/>
<dbReference type="GeneCards" id="LRP1"/>
<dbReference type="HGNC" id="HGNC:6692">
    <property type="gene designation" value="LRP1"/>
</dbReference>
<dbReference type="HPA" id="ENSG00000123384">
    <property type="expression patterns" value="Tissue enhanced (adipose)"/>
</dbReference>
<dbReference type="MalaCards" id="LRP1"/>
<dbReference type="MIM" id="107770">
    <property type="type" value="gene"/>
</dbReference>
<dbReference type="MIM" id="604093">
    <property type="type" value="phenotype"/>
</dbReference>
<dbReference type="MIM" id="620690">
    <property type="type" value="phenotype"/>
</dbReference>
<dbReference type="neXtProt" id="NX_Q07954"/>
<dbReference type="OpenTargets" id="ENSG00000123384"/>
<dbReference type="Orphanet" id="79100">
    <property type="disease" value="Atrophoderma vermiculata"/>
</dbReference>
<dbReference type="Orphanet" id="2340">
    <property type="disease" value="Keratosis follicularis spinulosa decalvans"/>
</dbReference>
<dbReference type="PharmGKB" id="PA233"/>
<dbReference type="VEuPathDB" id="HostDB:ENSG00000123384"/>
<dbReference type="eggNOG" id="KOG1215">
    <property type="taxonomic scope" value="Eukaryota"/>
</dbReference>
<dbReference type="GeneTree" id="ENSGT00940000157899"/>
<dbReference type="HOGENOM" id="CLU_000085_1_0_1"/>
<dbReference type="InParanoid" id="Q07954"/>
<dbReference type="OMA" id="MCDHDRD"/>
<dbReference type="OrthoDB" id="10066840at2759"/>
<dbReference type="PAN-GO" id="Q07954">
    <property type="GO annotations" value="7 GO annotations based on evolutionary models"/>
</dbReference>
<dbReference type="PhylomeDB" id="Q07954"/>
<dbReference type="TreeFam" id="TF315253"/>
<dbReference type="PathwayCommons" id="Q07954"/>
<dbReference type="Reactome" id="R-HSA-2168880">
    <property type="pathway name" value="Scavenging of heme from plasma"/>
</dbReference>
<dbReference type="Reactome" id="R-HSA-975634">
    <property type="pathway name" value="Retinoid metabolism and transport"/>
</dbReference>
<dbReference type="SignaLink" id="Q07954"/>
<dbReference type="SIGNOR" id="Q07954"/>
<dbReference type="BioGRID-ORCS" id="4035">
    <property type="hits" value="17 hits in 1153 CRISPR screens"/>
</dbReference>
<dbReference type="CD-CODE" id="FB4E32DD">
    <property type="entry name" value="Presynaptic clusters and postsynaptic densities"/>
</dbReference>
<dbReference type="ChiTaRS" id="LRP1">
    <property type="organism name" value="human"/>
</dbReference>
<dbReference type="EvolutionaryTrace" id="Q07954"/>
<dbReference type="GeneWiki" id="LRP1"/>
<dbReference type="GenomeRNAi" id="4035"/>
<dbReference type="Pharos" id="Q07954">
    <property type="development level" value="Tbio"/>
</dbReference>
<dbReference type="PRO" id="PR:Q07954"/>
<dbReference type="Proteomes" id="UP000005640">
    <property type="component" value="Chromosome 12"/>
</dbReference>
<dbReference type="RNAct" id="Q07954">
    <property type="molecule type" value="protein"/>
</dbReference>
<dbReference type="Bgee" id="ENSG00000123384">
    <property type="expression patterns" value="Expressed in stromal cell of endometrium and 203 other cell types or tissues"/>
</dbReference>
<dbReference type="ExpressionAtlas" id="Q07954">
    <property type="expression patterns" value="baseline and differential"/>
</dbReference>
<dbReference type="GO" id="GO:0016323">
    <property type="term" value="C:basolateral plasma membrane"/>
    <property type="evidence" value="ECO:0000314"/>
    <property type="project" value="ARUK-UCL"/>
</dbReference>
<dbReference type="GO" id="GO:0005905">
    <property type="term" value="C:clathrin-coated pit"/>
    <property type="evidence" value="ECO:0007669"/>
    <property type="project" value="UniProtKB-KW"/>
</dbReference>
<dbReference type="GO" id="GO:0005829">
    <property type="term" value="C:cytosol"/>
    <property type="evidence" value="ECO:0000314"/>
    <property type="project" value="HPA"/>
</dbReference>
<dbReference type="GO" id="GO:0005769">
    <property type="term" value="C:early endosome"/>
    <property type="evidence" value="ECO:0000314"/>
    <property type="project" value="ARUK-UCL"/>
</dbReference>
<dbReference type="GO" id="GO:0030666">
    <property type="term" value="C:endocytic vesicle membrane"/>
    <property type="evidence" value="ECO:0000304"/>
    <property type="project" value="Reactome"/>
</dbReference>
<dbReference type="GO" id="GO:0005925">
    <property type="term" value="C:focal adhesion"/>
    <property type="evidence" value="ECO:0007005"/>
    <property type="project" value="UniProtKB"/>
</dbReference>
<dbReference type="GO" id="GO:0005794">
    <property type="term" value="C:Golgi apparatus"/>
    <property type="evidence" value="ECO:0007669"/>
    <property type="project" value="UniProtKB-KW"/>
</dbReference>
<dbReference type="GO" id="GO:0005765">
    <property type="term" value="C:lysosomal membrane"/>
    <property type="evidence" value="ECO:0007005"/>
    <property type="project" value="UniProtKB"/>
</dbReference>
<dbReference type="GO" id="GO:0016020">
    <property type="term" value="C:membrane"/>
    <property type="evidence" value="ECO:0000303"/>
    <property type="project" value="ARUK-UCL"/>
</dbReference>
<dbReference type="GO" id="GO:0005815">
    <property type="term" value="C:microtubule organizing center"/>
    <property type="evidence" value="ECO:0007669"/>
    <property type="project" value="UniProtKB-SubCell"/>
</dbReference>
<dbReference type="GO" id="GO:0005730">
    <property type="term" value="C:nucleolus"/>
    <property type="evidence" value="ECO:0000314"/>
    <property type="project" value="HPA"/>
</dbReference>
<dbReference type="GO" id="GO:0005886">
    <property type="term" value="C:plasma membrane"/>
    <property type="evidence" value="ECO:0000314"/>
    <property type="project" value="HPA"/>
</dbReference>
<dbReference type="GO" id="GO:0098797">
    <property type="term" value="C:plasma membrane protein complex"/>
    <property type="evidence" value="ECO:0000304"/>
    <property type="project" value="ARUK-UCL"/>
</dbReference>
<dbReference type="GO" id="GO:0043235">
    <property type="term" value="C:receptor complex"/>
    <property type="evidence" value="ECO:0000314"/>
    <property type="project" value="MGI"/>
</dbReference>
<dbReference type="GO" id="GO:0016964">
    <property type="term" value="F:alpha-2 macroglobulin receptor activity"/>
    <property type="evidence" value="ECO:0000315"/>
    <property type="project" value="UniProtKB"/>
</dbReference>
<dbReference type="GO" id="GO:0001540">
    <property type="term" value="F:amyloid-beta binding"/>
    <property type="evidence" value="ECO:0000305"/>
    <property type="project" value="ARUK-UCL"/>
</dbReference>
<dbReference type="GO" id="GO:0034185">
    <property type="term" value="F:apolipoprotein binding"/>
    <property type="evidence" value="ECO:0000314"/>
    <property type="project" value="UniProtKB"/>
</dbReference>
<dbReference type="GO" id="GO:0030226">
    <property type="term" value="F:apolipoprotein receptor activity"/>
    <property type="evidence" value="ECO:0000304"/>
    <property type="project" value="ARUK-UCL"/>
</dbReference>
<dbReference type="GO" id="GO:0005509">
    <property type="term" value="F:calcium ion binding"/>
    <property type="evidence" value="ECO:0000250"/>
    <property type="project" value="UniProtKB"/>
</dbReference>
<dbReference type="GO" id="GO:0038024">
    <property type="term" value="F:cargo receptor activity"/>
    <property type="evidence" value="ECO:0000315"/>
    <property type="project" value="ARUK-UCL"/>
</dbReference>
<dbReference type="GO" id="GO:0032050">
    <property type="term" value="F:clathrin heavy chain binding"/>
    <property type="evidence" value="ECO:0000353"/>
    <property type="project" value="ARUK-UCL"/>
</dbReference>
<dbReference type="GO" id="GO:0043395">
    <property type="term" value="F:heparan sulfate proteoglycan binding"/>
    <property type="evidence" value="ECO:0000304"/>
    <property type="project" value="ARUK-UCL"/>
</dbReference>
<dbReference type="GO" id="GO:0070325">
    <property type="term" value="F:lipoprotein particle receptor binding"/>
    <property type="evidence" value="ECO:0000305"/>
    <property type="project" value="BHF-UCL"/>
</dbReference>
<dbReference type="GO" id="GO:0005041">
    <property type="term" value="F:low-density lipoprotein particle receptor activity"/>
    <property type="evidence" value="ECO:0000304"/>
    <property type="project" value="ARUK-UCL"/>
</dbReference>
<dbReference type="GO" id="GO:0044877">
    <property type="term" value="F:protein-containing complex binding"/>
    <property type="evidence" value="ECO:0000314"/>
    <property type="project" value="BHF-UCL"/>
</dbReference>
<dbReference type="GO" id="GO:0003723">
    <property type="term" value="F:RNA binding"/>
    <property type="evidence" value="ECO:0007005"/>
    <property type="project" value="UniProtKB"/>
</dbReference>
<dbReference type="GO" id="GO:0005044">
    <property type="term" value="F:scavenger receptor activity"/>
    <property type="evidence" value="ECO:0000304"/>
    <property type="project" value="ARUK-UCL"/>
</dbReference>
<dbReference type="GO" id="GO:0038023">
    <property type="term" value="F:signaling receptor activity"/>
    <property type="evidence" value="ECO:0000304"/>
    <property type="project" value="ProtInc"/>
</dbReference>
<dbReference type="GO" id="GO:0097242">
    <property type="term" value="P:amyloid-beta clearance"/>
    <property type="evidence" value="ECO:0000304"/>
    <property type="project" value="BHF-UCL"/>
</dbReference>
<dbReference type="GO" id="GO:0150094">
    <property type="term" value="P:amyloid-beta clearance by cellular catabolic process"/>
    <property type="evidence" value="ECO:0000315"/>
    <property type="project" value="ARUK-UCL"/>
</dbReference>
<dbReference type="GO" id="GO:0150093">
    <property type="term" value="P:amyloid-beta clearance by transcytosis"/>
    <property type="evidence" value="ECO:0000316"/>
    <property type="project" value="ARUK-UCL"/>
</dbReference>
<dbReference type="GO" id="GO:0035909">
    <property type="term" value="P:aorta morphogenesis"/>
    <property type="evidence" value="ECO:0000250"/>
    <property type="project" value="BHF-UCL"/>
</dbReference>
<dbReference type="GO" id="GO:0043277">
    <property type="term" value="P:apoptotic cell clearance"/>
    <property type="evidence" value="ECO:0000250"/>
    <property type="project" value="BHF-UCL"/>
</dbReference>
<dbReference type="GO" id="GO:0002265">
    <property type="term" value="P:astrocyte activation involved in immune response"/>
    <property type="evidence" value="ECO:0000250"/>
    <property type="project" value="ARUK-UCL"/>
</dbReference>
<dbReference type="GO" id="GO:1904646">
    <property type="term" value="P:cellular response to amyloid-beta"/>
    <property type="evidence" value="ECO:0000250"/>
    <property type="project" value="ARUK-UCL"/>
</dbReference>
<dbReference type="GO" id="GO:0007167">
    <property type="term" value="P:enzyme-linked receptor protein signaling pathway"/>
    <property type="evidence" value="ECO:0000250"/>
    <property type="project" value="BHF-UCL"/>
</dbReference>
<dbReference type="GO" id="GO:0006629">
    <property type="term" value="P:lipid metabolic process"/>
    <property type="evidence" value="ECO:0000304"/>
    <property type="project" value="ARUK-UCL"/>
</dbReference>
<dbReference type="GO" id="GO:0042953">
    <property type="term" value="P:lipoprotein transport"/>
    <property type="evidence" value="ECO:0000303"/>
    <property type="project" value="UniProtKB"/>
</dbReference>
<dbReference type="GO" id="GO:0007041">
    <property type="term" value="P:lysosomal transport"/>
    <property type="evidence" value="ECO:0000250"/>
    <property type="project" value="UniProtKB"/>
</dbReference>
<dbReference type="GO" id="GO:0010629">
    <property type="term" value="P:negative regulation of gene expression"/>
    <property type="evidence" value="ECO:0000250"/>
    <property type="project" value="BHF-UCL"/>
</dbReference>
<dbReference type="GO" id="GO:2000587">
    <property type="term" value="P:negative regulation of platelet-derived growth factor receptor-beta signaling pathway"/>
    <property type="evidence" value="ECO:0000250"/>
    <property type="project" value="BHF-UCL"/>
</dbReference>
<dbReference type="GO" id="GO:0060392">
    <property type="term" value="P:negative regulation of SMAD protein signal transduction"/>
    <property type="evidence" value="ECO:0000250"/>
    <property type="project" value="BHF-UCL"/>
</dbReference>
<dbReference type="GO" id="GO:0014912">
    <property type="term" value="P:negative regulation of smooth muscle cell migration"/>
    <property type="evidence" value="ECO:0000250"/>
    <property type="project" value="BHF-UCL"/>
</dbReference>
<dbReference type="GO" id="GO:0030178">
    <property type="term" value="P:negative regulation of Wnt signaling pathway"/>
    <property type="evidence" value="ECO:0000250"/>
    <property type="project" value="BHF-UCL"/>
</dbReference>
<dbReference type="GO" id="GO:0006909">
    <property type="term" value="P:phagocytosis"/>
    <property type="evidence" value="ECO:0000315"/>
    <property type="project" value="ARUK-UCL"/>
</dbReference>
<dbReference type="GO" id="GO:1900223">
    <property type="term" value="P:positive regulation of amyloid-beta clearance"/>
    <property type="evidence" value="ECO:0000250"/>
    <property type="project" value="ARUK-UCL"/>
</dbReference>
<dbReference type="GO" id="GO:0010875">
    <property type="term" value="P:positive regulation of cholesterol efflux"/>
    <property type="evidence" value="ECO:0000250"/>
    <property type="project" value="BHF-UCL"/>
</dbReference>
<dbReference type="GO" id="GO:0045807">
    <property type="term" value="P:positive regulation of endocytosis"/>
    <property type="evidence" value="ECO:0000316"/>
    <property type="project" value="ARUK-UCL"/>
</dbReference>
<dbReference type="GO" id="GO:0032370">
    <property type="term" value="P:positive regulation of lipid transport"/>
    <property type="evidence" value="ECO:0000250"/>
    <property type="project" value="BHF-UCL"/>
</dbReference>
<dbReference type="GO" id="GO:1905167">
    <property type="term" value="P:positive regulation of lysosomal protein catabolic process"/>
    <property type="evidence" value="ECO:0000315"/>
    <property type="project" value="ARUK-UCL"/>
</dbReference>
<dbReference type="GO" id="GO:1903078">
    <property type="term" value="P:positive regulation of protein localization to plasma membrane"/>
    <property type="evidence" value="ECO:0000316"/>
    <property type="project" value="ARUK-UCL"/>
</dbReference>
<dbReference type="GO" id="GO:1903064">
    <property type="term" value="P:positive regulation of reverse cholesterol transport"/>
    <property type="evidence" value="ECO:0000250"/>
    <property type="project" value="BHF-UCL"/>
</dbReference>
<dbReference type="GO" id="GO:1904300">
    <property type="term" value="P:positive regulation of transcytosis"/>
    <property type="evidence" value="ECO:0000250"/>
    <property type="project" value="ARUK-UCL"/>
</dbReference>
<dbReference type="GO" id="GO:0031623">
    <property type="term" value="P:receptor internalization"/>
    <property type="evidence" value="ECO:0000304"/>
    <property type="project" value="ARUK-UCL"/>
</dbReference>
<dbReference type="GO" id="GO:0006898">
    <property type="term" value="P:receptor-mediated endocytosis"/>
    <property type="evidence" value="ECO:0000315"/>
    <property type="project" value="ARUK-UCL"/>
</dbReference>
<dbReference type="GO" id="GO:0032956">
    <property type="term" value="P:regulation of actin cytoskeleton organization"/>
    <property type="evidence" value="ECO:0000250"/>
    <property type="project" value="BHF-UCL"/>
</dbReference>
<dbReference type="GO" id="GO:0010715">
    <property type="term" value="P:regulation of extracellular matrix disassembly"/>
    <property type="evidence" value="ECO:0000304"/>
    <property type="project" value="ParkinsonsUK-UCL"/>
</dbReference>
<dbReference type="GO" id="GO:1903053">
    <property type="term" value="P:regulation of extracellular matrix organization"/>
    <property type="evidence" value="ECO:0000315"/>
    <property type="project" value="ARUK-UCL"/>
</dbReference>
<dbReference type="GO" id="GO:0001523">
    <property type="term" value="P:retinoid metabolic process"/>
    <property type="evidence" value="ECO:0000304"/>
    <property type="project" value="Reactome"/>
</dbReference>
<dbReference type="GO" id="GO:0045056">
    <property type="term" value="P:transcytosis"/>
    <property type="evidence" value="ECO:0000304"/>
    <property type="project" value="ARUK-UCL"/>
</dbReference>
<dbReference type="GO" id="GO:0150104">
    <property type="term" value="P:transport across blood-brain barrier"/>
    <property type="evidence" value="ECO:0000250"/>
    <property type="project" value="ARUK-UCL"/>
</dbReference>
<dbReference type="CDD" id="cd00054">
    <property type="entry name" value="EGF_CA"/>
    <property type="match status" value="1"/>
</dbReference>
<dbReference type="CDD" id="cd00112">
    <property type="entry name" value="LDLa"/>
    <property type="match status" value="31"/>
</dbReference>
<dbReference type="FunFam" id="2.10.25.10:FF:000204">
    <property type="entry name" value="LDL receptor related protein 1"/>
    <property type="match status" value="1"/>
</dbReference>
<dbReference type="FunFam" id="4.10.400.10:FF:000020">
    <property type="entry name" value="LDL receptor related protein 1"/>
    <property type="match status" value="1"/>
</dbReference>
<dbReference type="FunFam" id="4.10.400.10:FF:000022">
    <property type="entry name" value="LDL receptor related protein 1"/>
    <property type="match status" value="1"/>
</dbReference>
<dbReference type="FunFam" id="4.10.400.10:FF:000066">
    <property type="entry name" value="LDL receptor related protein 1"/>
    <property type="match status" value="1"/>
</dbReference>
<dbReference type="FunFam" id="2.120.10.30:FF:000012">
    <property type="entry name" value="Low density lipoprotein receptor-related protein 1"/>
    <property type="match status" value="1"/>
</dbReference>
<dbReference type="FunFam" id="4.10.400.10:FF:000007">
    <property type="entry name" value="Low density lipoprotein receptor-related protein 1"/>
    <property type="match status" value="1"/>
</dbReference>
<dbReference type="FunFam" id="4.10.400.10:FF:000008">
    <property type="entry name" value="Low density lipoprotein receptor-related protein 1"/>
    <property type="match status" value="1"/>
</dbReference>
<dbReference type="FunFam" id="4.10.400.10:FF:000021">
    <property type="entry name" value="Low density lipoprotein receptor-related protein 1"/>
    <property type="match status" value="1"/>
</dbReference>
<dbReference type="FunFam" id="4.10.400.10:FF:000023">
    <property type="entry name" value="Low density lipoprotein receptor-related protein 1"/>
    <property type="match status" value="1"/>
</dbReference>
<dbReference type="FunFam" id="2.120.10.30:FF:000010">
    <property type="entry name" value="Low density lipoprotein receptor-related protein 1B"/>
    <property type="match status" value="1"/>
</dbReference>
<dbReference type="FunFam" id="2.10.25.10:FF:000009">
    <property type="entry name" value="Low-density lipoprotein receptor isoform 1"/>
    <property type="match status" value="1"/>
</dbReference>
<dbReference type="FunFam" id="2.10.25.10:FF:000129">
    <property type="entry name" value="Low-density lipoprotein receptor-related protein 1"/>
    <property type="match status" value="1"/>
</dbReference>
<dbReference type="FunFam" id="2.10.25.10:FF:000144">
    <property type="entry name" value="Low-density lipoprotein receptor-related protein 1"/>
    <property type="match status" value="1"/>
</dbReference>
<dbReference type="FunFam" id="2.10.25.10:FF:000505">
    <property type="entry name" value="Low-density lipoprotein receptor-related protein 1"/>
    <property type="match status" value="1"/>
</dbReference>
<dbReference type="FunFam" id="2.120.10.30:FF:000014">
    <property type="entry name" value="Low-density lipoprotein receptor-related protein 1"/>
    <property type="match status" value="1"/>
</dbReference>
<dbReference type="FunFam" id="2.120.10.30:FF:000015">
    <property type="entry name" value="Low-density lipoprotein receptor-related protein 1"/>
    <property type="match status" value="1"/>
</dbReference>
<dbReference type="FunFam" id="2.120.10.30:FF:000018">
    <property type="entry name" value="Low-density lipoprotein receptor-related protein 1"/>
    <property type="match status" value="1"/>
</dbReference>
<dbReference type="FunFam" id="2.120.10.30:FF:000019">
    <property type="entry name" value="Low-density lipoprotein receptor-related protein 1"/>
    <property type="match status" value="1"/>
</dbReference>
<dbReference type="FunFam" id="4.10.400.10:FF:000001">
    <property type="entry name" value="Low-density lipoprotein receptor-related protein 1"/>
    <property type="match status" value="1"/>
</dbReference>
<dbReference type="FunFam" id="4.10.400.10:FF:000002">
    <property type="entry name" value="Low-density lipoprotein receptor-related protein 1"/>
    <property type="match status" value="4"/>
</dbReference>
<dbReference type="FunFam" id="4.10.400.10:FF:000004">
    <property type="entry name" value="Low-density lipoprotein receptor-related protein 1"/>
    <property type="match status" value="1"/>
</dbReference>
<dbReference type="FunFam" id="4.10.400.10:FF:000009">
    <property type="entry name" value="Low-density lipoprotein receptor-related protein 1"/>
    <property type="match status" value="1"/>
</dbReference>
<dbReference type="FunFam" id="4.10.400.10:FF:000010">
    <property type="entry name" value="Low-density lipoprotein receptor-related protein 1"/>
    <property type="match status" value="1"/>
</dbReference>
<dbReference type="FunFam" id="4.10.400.10:FF:000011">
    <property type="entry name" value="Low-density lipoprotein receptor-related protein 1"/>
    <property type="match status" value="1"/>
</dbReference>
<dbReference type="FunFam" id="4.10.400.10:FF:000012">
    <property type="entry name" value="Low-density lipoprotein receptor-related protein 1"/>
    <property type="match status" value="1"/>
</dbReference>
<dbReference type="FunFam" id="4.10.400.10:FF:000015">
    <property type="entry name" value="Low-density lipoprotein receptor-related protein 1"/>
    <property type="match status" value="1"/>
</dbReference>
<dbReference type="FunFam" id="4.10.400.10:FF:000018">
    <property type="entry name" value="Low-density lipoprotein receptor-related protein 1"/>
    <property type="match status" value="1"/>
</dbReference>
<dbReference type="FunFam" id="4.10.400.10:FF:000026">
    <property type="entry name" value="Low-density lipoprotein receptor-related protein 1"/>
    <property type="match status" value="1"/>
</dbReference>
<dbReference type="FunFam" id="4.10.400.10:FF:000031">
    <property type="entry name" value="Low-density lipoprotein receptor-related protein 1"/>
    <property type="match status" value="1"/>
</dbReference>
<dbReference type="FunFam" id="2.10.25.10:FF:000072">
    <property type="entry name" value="Low-density lipoprotein receptor-related protein 1B"/>
    <property type="match status" value="1"/>
</dbReference>
<dbReference type="FunFam" id="4.10.400.10:FF:000005">
    <property type="entry name" value="low-density lipoprotein receptor-related protein 1B"/>
    <property type="match status" value="1"/>
</dbReference>
<dbReference type="FunFam" id="2.10.25.10:FF:000088">
    <property type="entry name" value="Prolow-density lipoprotein receptor-related protein 1"/>
    <property type="match status" value="1"/>
</dbReference>
<dbReference type="FunFam" id="2.120.10.30:FF:000020">
    <property type="entry name" value="Prolow-density lipoprotein receptor-related protein 1"/>
    <property type="match status" value="1"/>
</dbReference>
<dbReference type="FunFam" id="4.10.1220.10:FF:000001">
    <property type="entry name" value="Prolow-density lipoprotein receptor-related protein 1"/>
    <property type="match status" value="1"/>
</dbReference>
<dbReference type="FunFam" id="4.10.400.10:FF:000013">
    <property type="entry name" value="Prolow-density lipoprotein receptor-related protein 1"/>
    <property type="match status" value="1"/>
</dbReference>
<dbReference type="FunFam" id="4.10.400.10:FF:000047">
    <property type="entry name" value="Prolow-density lipoprotein receptor-related protein 1"/>
    <property type="match status" value="1"/>
</dbReference>
<dbReference type="FunFam" id="4.10.400.10:FF:000059">
    <property type="entry name" value="Prolow-density lipoprotein receptor-related protein 1"/>
    <property type="match status" value="1"/>
</dbReference>
<dbReference type="FunFam" id="4.10.400.10:FF:000071">
    <property type="entry name" value="Prolow-density lipoprotein receptor-related protein 1"/>
    <property type="match status" value="1"/>
</dbReference>
<dbReference type="FunFam" id="2.10.25.10:FF:000458">
    <property type="entry name" value="prolow-density lipoprotein receptor-related protein 1"/>
    <property type="match status" value="1"/>
</dbReference>
<dbReference type="FunFam" id="4.10.400.10:FF:000028">
    <property type="entry name" value="prolow-density lipoprotein receptor-related protein 1"/>
    <property type="match status" value="1"/>
</dbReference>
<dbReference type="FunFam" id="4.10.400.10:FF:000029">
    <property type="entry name" value="prolow-density lipoprotein receptor-related protein 1"/>
    <property type="match status" value="1"/>
</dbReference>
<dbReference type="FunFam" id="4.10.400.10:FF:000035">
    <property type="entry name" value="prolow-density lipoprotein receptor-related protein 1"/>
    <property type="match status" value="1"/>
</dbReference>
<dbReference type="FunFam" id="2.120.10.30:FF:000009">
    <property type="entry name" value="Putative low-density lipoprotein receptor-related protein 1B"/>
    <property type="match status" value="1"/>
</dbReference>
<dbReference type="Gene3D" id="4.10.1220.10">
    <property type="entry name" value="EGF-type module"/>
    <property type="match status" value="1"/>
</dbReference>
<dbReference type="Gene3D" id="2.10.25.10">
    <property type="entry name" value="Laminin"/>
    <property type="match status" value="13"/>
</dbReference>
<dbReference type="Gene3D" id="4.10.400.10">
    <property type="entry name" value="Low-density Lipoprotein Receptor"/>
    <property type="match status" value="30"/>
</dbReference>
<dbReference type="Gene3D" id="2.120.10.30">
    <property type="entry name" value="TolB, C-terminal domain"/>
    <property type="match status" value="8"/>
</dbReference>
<dbReference type="InterPro" id="IPR011042">
    <property type="entry name" value="6-blade_b-propeller_TolB-like"/>
</dbReference>
<dbReference type="InterPro" id="IPR026823">
    <property type="entry name" value="cEGF"/>
</dbReference>
<dbReference type="InterPro" id="IPR001881">
    <property type="entry name" value="EGF-like_Ca-bd_dom"/>
</dbReference>
<dbReference type="InterPro" id="IPR000742">
    <property type="entry name" value="EGF-like_dom"/>
</dbReference>
<dbReference type="InterPro" id="IPR000152">
    <property type="entry name" value="EGF-type_Asp/Asn_hydroxyl_site"/>
</dbReference>
<dbReference type="InterPro" id="IPR018097">
    <property type="entry name" value="EGF_Ca-bd_CS"/>
</dbReference>
<dbReference type="InterPro" id="IPR009030">
    <property type="entry name" value="Growth_fac_rcpt_cys_sf"/>
</dbReference>
<dbReference type="InterPro" id="IPR036055">
    <property type="entry name" value="LDL_receptor-like_sf"/>
</dbReference>
<dbReference type="InterPro" id="IPR051221">
    <property type="entry name" value="LDLR-related"/>
</dbReference>
<dbReference type="InterPro" id="IPR023415">
    <property type="entry name" value="LDLR_class-A_CS"/>
</dbReference>
<dbReference type="InterPro" id="IPR000033">
    <property type="entry name" value="LDLR_classB_rpt"/>
</dbReference>
<dbReference type="InterPro" id="IPR002172">
    <property type="entry name" value="LDrepeatLR_classA_rpt"/>
</dbReference>
<dbReference type="InterPro" id="IPR032485">
    <property type="entry name" value="LRP1-like_beta_prop"/>
</dbReference>
<dbReference type="InterPro" id="IPR049883">
    <property type="entry name" value="NOTCH1_EGF-like"/>
</dbReference>
<dbReference type="PANTHER" id="PTHR22722:SF15">
    <property type="entry name" value="LOW-DENSITY LIPOPROTEIN RECEPTOR-RELATED"/>
    <property type="match status" value="1"/>
</dbReference>
<dbReference type="PANTHER" id="PTHR22722">
    <property type="entry name" value="LOW-DENSITY LIPOPROTEIN RECEPTOR-RELATED PROTEIN 2-RELATED"/>
    <property type="match status" value="1"/>
</dbReference>
<dbReference type="Pfam" id="PF12662">
    <property type="entry name" value="cEGF"/>
    <property type="match status" value="1"/>
</dbReference>
<dbReference type="Pfam" id="PF16472">
    <property type="entry name" value="DUF5050"/>
    <property type="match status" value="1"/>
</dbReference>
<dbReference type="Pfam" id="PF07645">
    <property type="entry name" value="EGF_CA"/>
    <property type="match status" value="2"/>
</dbReference>
<dbReference type="Pfam" id="PF14670">
    <property type="entry name" value="FXa_inhibition"/>
    <property type="match status" value="3"/>
</dbReference>
<dbReference type="Pfam" id="PF00057">
    <property type="entry name" value="Ldl_recept_a"/>
    <property type="match status" value="29"/>
</dbReference>
<dbReference type="Pfam" id="PF00058">
    <property type="entry name" value="Ldl_recept_b"/>
    <property type="match status" value="11"/>
</dbReference>
<dbReference type="PRINTS" id="PR00261">
    <property type="entry name" value="LDLRECEPTOR"/>
</dbReference>
<dbReference type="SMART" id="SM00181">
    <property type="entry name" value="EGF"/>
    <property type="match status" value="26"/>
</dbReference>
<dbReference type="SMART" id="SM00179">
    <property type="entry name" value="EGF_CA"/>
    <property type="match status" value="7"/>
</dbReference>
<dbReference type="SMART" id="SM00192">
    <property type="entry name" value="LDLa"/>
    <property type="match status" value="31"/>
</dbReference>
<dbReference type="SMART" id="SM00135">
    <property type="entry name" value="LY"/>
    <property type="match status" value="35"/>
</dbReference>
<dbReference type="SUPFAM" id="SSF57196">
    <property type="entry name" value="EGF/Laminin"/>
    <property type="match status" value="3"/>
</dbReference>
<dbReference type="SUPFAM" id="SSF57184">
    <property type="entry name" value="Growth factor receptor domain"/>
    <property type="match status" value="4"/>
</dbReference>
<dbReference type="SUPFAM" id="SSF57424">
    <property type="entry name" value="LDL receptor-like module"/>
    <property type="match status" value="30"/>
</dbReference>
<dbReference type="SUPFAM" id="SSF63825">
    <property type="entry name" value="YWTD domain"/>
    <property type="match status" value="8"/>
</dbReference>
<dbReference type="PROSITE" id="PS00010">
    <property type="entry name" value="ASX_HYDROXYL"/>
    <property type="match status" value="3"/>
</dbReference>
<dbReference type="PROSITE" id="PS00022">
    <property type="entry name" value="EGF_1"/>
    <property type="match status" value="5"/>
</dbReference>
<dbReference type="PROSITE" id="PS01186">
    <property type="entry name" value="EGF_2"/>
    <property type="match status" value="8"/>
</dbReference>
<dbReference type="PROSITE" id="PS50026">
    <property type="entry name" value="EGF_3"/>
    <property type="match status" value="6"/>
</dbReference>
<dbReference type="PROSITE" id="PS01187">
    <property type="entry name" value="EGF_CA"/>
    <property type="match status" value="2"/>
</dbReference>
<dbReference type="PROSITE" id="PS01209">
    <property type="entry name" value="LDLRA_1"/>
    <property type="match status" value="27"/>
</dbReference>
<dbReference type="PROSITE" id="PS50068">
    <property type="entry name" value="LDLRA_2"/>
    <property type="match status" value="31"/>
</dbReference>
<dbReference type="PROSITE" id="PS51120">
    <property type="entry name" value="LDLRB"/>
    <property type="match status" value="34"/>
</dbReference>
<reference key="1">
    <citation type="journal article" date="1988" name="EMBO J.">
        <title>Surface location and high affinity for calcium of a 500-kd liver membrane protein closely related to the LDL-receptor suggest a physiological role as lipoprotein receptor.</title>
        <authorList>
            <person name="Herz J."/>
            <person name="Hamann U."/>
            <person name="Rogne S."/>
            <person name="Myklebost O."/>
            <person name="Gausepohl H."/>
            <person name="Stanley K.K."/>
        </authorList>
    </citation>
    <scope>NUCLEOTIDE SEQUENCE [MRNA] (ISOFORM 1)</scope>
    <scope>VARIANT PRO-2900</scope>
    <source>
        <tissue>Liver</tissue>
    </source>
</reference>
<reference key="2">
    <citation type="journal article" date="1994" name="Genomics">
        <title>Structure of the gene (LRP1) coding for the human alpha 2-macroglobulin receptor lipoprotein receptor-related protein.</title>
        <authorList>
            <person name="Van Leuven F."/>
            <person name="Stas L."/>
            <person name="Hilliker C."/>
            <person name="Lorent K."/>
            <person name="Umans L."/>
            <person name="Serneels L."/>
            <person name="Overbergh L."/>
            <person name="Torrekens S."/>
            <person name="Moechars D."/>
            <person name="De Strooper B."/>
            <person name="Van den Berghe H."/>
        </authorList>
    </citation>
    <scope>NUCLEOTIDE SEQUENCE [GENOMIC DNA]</scope>
</reference>
<reference key="3">
    <citation type="journal article" date="1998" name="Genomics">
        <title>Strategy to sequence the 89 exons of the human LRP1 gene coding for the lipoprotein receptor related protein: identification of one expressed mutation among 48 polymorphisms.</title>
        <authorList>
            <person name="Van Leuven F."/>
            <person name="Stas L."/>
            <person name="Thiry E."/>
            <person name="Nelissen B."/>
            <person name="Miyake Y."/>
        </authorList>
    </citation>
    <scope>NUCLEOTIDE SEQUENCE [GENOMIC DNA]</scope>
    <scope>VARIANT PRO-2900</scope>
</reference>
<reference key="4">
    <citation type="submission" date="2005-12" db="EMBL/GenBank/DDBJ databases">
        <authorList>
            <consortium name="NHLBI resequencing and genotyping service (RS&amp;G)"/>
        </authorList>
    </citation>
    <scope>NUCLEOTIDE SEQUENCE [GENOMIC DNA]</scope>
    <scope>VARIANT PRO-2900</scope>
</reference>
<reference key="5">
    <citation type="journal article" date="2006" name="Nature">
        <title>The finished DNA sequence of human chromosome 12.</title>
        <authorList>
            <person name="Scherer S.E."/>
            <person name="Muzny D.M."/>
            <person name="Buhay C.J."/>
            <person name="Chen R."/>
            <person name="Cree A."/>
            <person name="Ding Y."/>
            <person name="Dugan-Rocha S."/>
            <person name="Gill R."/>
            <person name="Gunaratne P."/>
            <person name="Harris R.A."/>
            <person name="Hawes A.C."/>
            <person name="Hernandez J."/>
            <person name="Hodgson A.V."/>
            <person name="Hume J."/>
            <person name="Jackson A."/>
            <person name="Khan Z.M."/>
            <person name="Kovar-Smith C."/>
            <person name="Lewis L.R."/>
            <person name="Lozado R.J."/>
            <person name="Metzker M.L."/>
            <person name="Milosavljevic A."/>
            <person name="Miner G.R."/>
            <person name="Montgomery K.T."/>
            <person name="Morgan M.B."/>
            <person name="Nazareth L.V."/>
            <person name="Scott G."/>
            <person name="Sodergren E."/>
            <person name="Song X.-Z."/>
            <person name="Steffen D."/>
            <person name="Lovering R.C."/>
            <person name="Wheeler D.A."/>
            <person name="Worley K.C."/>
            <person name="Yuan Y."/>
            <person name="Zhang Z."/>
            <person name="Adams C.Q."/>
            <person name="Ansari-Lari M.A."/>
            <person name="Ayele M."/>
            <person name="Brown M.J."/>
            <person name="Chen G."/>
            <person name="Chen Z."/>
            <person name="Clerc-Blankenburg K.P."/>
            <person name="Davis C."/>
            <person name="Delgado O."/>
            <person name="Dinh H.H."/>
            <person name="Draper H."/>
            <person name="Gonzalez-Garay M.L."/>
            <person name="Havlak P."/>
            <person name="Jackson L.R."/>
            <person name="Jacob L.S."/>
            <person name="Kelly S.H."/>
            <person name="Li L."/>
            <person name="Li Z."/>
            <person name="Liu J."/>
            <person name="Liu W."/>
            <person name="Lu J."/>
            <person name="Maheshwari M."/>
            <person name="Nguyen B.-V."/>
            <person name="Okwuonu G.O."/>
            <person name="Pasternak S."/>
            <person name="Perez L.M."/>
            <person name="Plopper F.J.H."/>
            <person name="Santibanez J."/>
            <person name="Shen H."/>
            <person name="Tabor P.E."/>
            <person name="Verduzco D."/>
            <person name="Waldron L."/>
            <person name="Wang Q."/>
            <person name="Williams G.A."/>
            <person name="Zhang J."/>
            <person name="Zhou J."/>
            <person name="Allen C.C."/>
            <person name="Amin A.G."/>
            <person name="Anyalebechi V."/>
            <person name="Bailey M."/>
            <person name="Barbaria J.A."/>
            <person name="Bimage K.E."/>
            <person name="Bryant N.P."/>
            <person name="Burch P.E."/>
            <person name="Burkett C.E."/>
            <person name="Burrell K.L."/>
            <person name="Calderon E."/>
            <person name="Cardenas V."/>
            <person name="Carter K."/>
            <person name="Casias K."/>
            <person name="Cavazos I."/>
            <person name="Cavazos S.R."/>
            <person name="Ceasar H."/>
            <person name="Chacko J."/>
            <person name="Chan S.N."/>
            <person name="Chavez D."/>
            <person name="Christopoulos C."/>
            <person name="Chu J."/>
            <person name="Cockrell R."/>
            <person name="Cox C.D."/>
            <person name="Dang M."/>
            <person name="Dathorne S.R."/>
            <person name="David R."/>
            <person name="Davis C.M."/>
            <person name="Davy-Carroll L."/>
            <person name="Deshazo D.R."/>
            <person name="Donlin J.E."/>
            <person name="D'Souza L."/>
            <person name="Eaves K.A."/>
            <person name="Egan A."/>
            <person name="Emery-Cohen A.J."/>
            <person name="Escotto M."/>
            <person name="Flagg N."/>
            <person name="Forbes L.D."/>
            <person name="Gabisi A.M."/>
            <person name="Garza M."/>
            <person name="Hamilton C."/>
            <person name="Henderson N."/>
            <person name="Hernandez O."/>
            <person name="Hines S."/>
            <person name="Hogues M.E."/>
            <person name="Huang M."/>
            <person name="Idlebird D.G."/>
            <person name="Johnson R."/>
            <person name="Jolivet A."/>
            <person name="Jones S."/>
            <person name="Kagan R."/>
            <person name="King L.M."/>
            <person name="Leal B."/>
            <person name="Lebow H."/>
            <person name="Lee S."/>
            <person name="LeVan J.M."/>
            <person name="Lewis L.C."/>
            <person name="London P."/>
            <person name="Lorensuhewa L.M."/>
            <person name="Loulseged H."/>
            <person name="Lovett D.A."/>
            <person name="Lucier A."/>
            <person name="Lucier R.L."/>
            <person name="Ma J."/>
            <person name="Madu R.C."/>
            <person name="Mapua P."/>
            <person name="Martindale A.D."/>
            <person name="Martinez E."/>
            <person name="Massey E."/>
            <person name="Mawhiney S."/>
            <person name="Meador M.G."/>
            <person name="Mendez S."/>
            <person name="Mercado C."/>
            <person name="Mercado I.C."/>
            <person name="Merritt C.E."/>
            <person name="Miner Z.L."/>
            <person name="Minja E."/>
            <person name="Mitchell T."/>
            <person name="Mohabbat F."/>
            <person name="Mohabbat K."/>
            <person name="Montgomery B."/>
            <person name="Moore N."/>
            <person name="Morris S."/>
            <person name="Munidasa M."/>
            <person name="Ngo R.N."/>
            <person name="Nguyen N.B."/>
            <person name="Nickerson E."/>
            <person name="Nwaokelemeh O.O."/>
            <person name="Nwokenkwo S."/>
            <person name="Obregon M."/>
            <person name="Oguh M."/>
            <person name="Oragunye N."/>
            <person name="Oviedo R.J."/>
            <person name="Parish B.J."/>
            <person name="Parker D.N."/>
            <person name="Parrish J."/>
            <person name="Parks K.L."/>
            <person name="Paul H.A."/>
            <person name="Payton B.A."/>
            <person name="Perez A."/>
            <person name="Perrin W."/>
            <person name="Pickens A."/>
            <person name="Primus E.L."/>
            <person name="Pu L.-L."/>
            <person name="Puazo M."/>
            <person name="Quiles M.M."/>
            <person name="Quiroz J.B."/>
            <person name="Rabata D."/>
            <person name="Reeves K."/>
            <person name="Ruiz S.J."/>
            <person name="Shao H."/>
            <person name="Sisson I."/>
            <person name="Sonaike T."/>
            <person name="Sorelle R.P."/>
            <person name="Sutton A.E."/>
            <person name="Svatek A.F."/>
            <person name="Svetz L.A."/>
            <person name="Tamerisa K.S."/>
            <person name="Taylor T.R."/>
            <person name="Teague B."/>
            <person name="Thomas N."/>
            <person name="Thorn R.D."/>
            <person name="Trejos Z.Y."/>
            <person name="Trevino B.K."/>
            <person name="Ukegbu O.N."/>
            <person name="Urban J.B."/>
            <person name="Vasquez L.I."/>
            <person name="Vera V.A."/>
            <person name="Villasana D.M."/>
            <person name="Wang L."/>
            <person name="Ward-Moore S."/>
            <person name="Warren J.T."/>
            <person name="Wei X."/>
            <person name="White F."/>
            <person name="Williamson A.L."/>
            <person name="Wleczyk R."/>
            <person name="Wooden H.S."/>
            <person name="Wooden S.H."/>
            <person name="Yen J."/>
            <person name="Yoon L."/>
            <person name="Yoon V."/>
            <person name="Zorrilla S.E."/>
            <person name="Nelson D."/>
            <person name="Kucherlapati R."/>
            <person name="Weinstock G."/>
            <person name="Gibbs R.A."/>
        </authorList>
    </citation>
    <scope>NUCLEOTIDE SEQUENCE [LARGE SCALE GENOMIC DNA]</scope>
</reference>
<reference key="6">
    <citation type="journal article" date="2004" name="Genome Res.">
        <title>The status, quality, and expansion of the NIH full-length cDNA project: the Mammalian Gene Collection (MGC).</title>
        <authorList>
            <consortium name="The MGC Project Team"/>
        </authorList>
    </citation>
    <scope>NUCLEOTIDE SEQUENCE [LARGE SCALE MRNA] (ISOFORM 2)</scope>
    <source>
        <tissue>Skin</tissue>
    </source>
</reference>
<reference key="7">
    <citation type="journal article" date="1989" name="Biochim. Biophys. Acta">
        <title>Structure of the low-density lipoprotein receptor-related protein (LRP) promoter.</title>
        <authorList>
            <person name="Kutt H."/>
            <person name="Herz J."/>
            <person name="Stanley K.K."/>
        </authorList>
    </citation>
    <scope>NUCLEOTIDE SEQUENCE [GENOMIC DNA] OF 1-11</scope>
</reference>
<reference key="8">
    <citation type="submission" date="1998-12" db="EMBL/GenBank/DDBJ databases">
        <authorList>
            <person name="Glaeser C."/>
        </authorList>
    </citation>
    <scope>NUCLEOTIDE SEQUENCE [GENOMIC DNA] OF 1-11</scope>
    <source>
        <tissue>Blood</tissue>
    </source>
</reference>
<reference key="9">
    <citation type="journal article" date="1990" name="J. Biol. Chem.">
        <title>Sequence identity between the alpha 2-macroglobulin receptor and low density lipoprotein receptor-related protein suggests that this molecule is a multifunctional receptor.</title>
        <authorList>
            <person name="Strickland D.K."/>
            <person name="Ashcom J.D."/>
            <person name="Williams S."/>
            <person name="Burgess W.H."/>
            <person name="Migliorini M."/>
            <person name="Argraves W.S."/>
        </authorList>
    </citation>
    <scope>PROTEIN SEQUENCE OF 150-166; 234-252; 685-695; 902-916; 1096-1109; 1743-1756; 2863-2874; 2949-2960; 3023-3039 AND 3277-3291</scope>
    <source>
        <tissue>Placenta</tissue>
    </source>
</reference>
<reference key="10">
    <citation type="journal article" date="1990" name="EMBO J.">
        <title>Proteolytic processing of the 600 kd low density lipoprotein receptor-related protein (LRP) occurs in a trans-Golgi compartment.</title>
        <authorList>
            <person name="Herz J."/>
            <person name="Kowal R.C."/>
            <person name="Goldstein J.L."/>
            <person name="Brown M.S."/>
        </authorList>
    </citation>
    <scope>PROTEOLYTIC PROCESSING</scope>
</reference>
<reference key="11">
    <citation type="journal article" date="1990" name="FEBS Lett.">
        <title>Evidence that the newly cloned low-density-lipoprotein receptor related protein (LRP) is the alpha 2-macroglobulin receptor.</title>
        <authorList>
            <person name="Kristensen T."/>
            <person name="Moestrup S.K."/>
            <person name="Gliemann J."/>
            <person name="Bendtsen L."/>
            <person name="Sand O."/>
            <person name="Sottrup-Jensen L."/>
        </authorList>
    </citation>
    <scope>FUNCTION</scope>
</reference>
<reference key="12">
    <citation type="journal article" date="1992" name="Cell">
        <title>LDL receptor-related protein internalizes and degrades uPA-PAI-1 complexes and is essential for embryo implantation.</title>
        <authorList>
            <person name="Herz J."/>
            <person name="Clouthier D.E."/>
            <person name="Hammer R.E."/>
        </authorList>
    </citation>
    <scope>INTERACTION WITH PLAU IN COMPLEX WITH SERPINE1</scope>
</reference>
<reference key="13">
    <citation type="journal article" date="1992" name="J. Biol. Chem.">
        <title>The alpha 2-macroglobulin receptor/low density lipoprotein receptor-related protein binds and internalizes Pseudomonas exotoxin A.</title>
        <authorList>
            <person name="Kounnas M.Z."/>
            <person name="Morris R.E."/>
            <person name="Thompson M.R."/>
            <person name="FitzGerald D.J."/>
            <person name="Strickland D.K."/>
            <person name="Saelinger C.B."/>
        </authorList>
    </citation>
    <scope>FUNCTION AS A RECEPTOR FOR P.AERUGINOSA EXOA TOXIN</scope>
</reference>
<reference key="14">
    <citation type="journal article" date="1997" name="J. Biol. Chem.">
        <title>The type V transforming growth factor beta receptor is the putative insulin-like growth factor-binding protein 3 receptor.</title>
        <authorList>
            <person name="Leal S.M."/>
            <person name="Liu Q."/>
            <person name="Huang S.S."/>
            <person name="Huang J.S."/>
        </authorList>
    </citation>
    <scope>FUNCTION</scope>
    <scope>INTERACTION WITH IGFBP3</scope>
</reference>
<reference key="15">
    <citation type="journal article" date="2000" name="Biochem. Biophys. Res. Commun.">
        <title>LDL receptor-related protein as a component of the midkine receptor.</title>
        <authorList>
            <person name="Muramatsu H."/>
            <person name="Zou K."/>
            <person name="Sakaguchi N."/>
            <person name="Ikematsu S."/>
            <person name="Sakuma S."/>
            <person name="Muramatsu T."/>
        </authorList>
    </citation>
    <scope>INTERACTION WITH MDK</scope>
</reference>
<reference key="16">
    <citation type="journal article" date="2002" name="J. Biol. Chem.">
        <title>Interaction of CED-6/GULP, an adapter protein involved in engulfment of apoptotic cells with CED-1 and CD91/low density lipoprotein receptor-related protein (LRP).</title>
        <authorList>
            <person name="Su H.P."/>
            <person name="Nakada-Tsukui K."/>
            <person name="Tosello-Trampont A.-C."/>
            <person name="Li Y."/>
            <person name="Bu G."/>
            <person name="Henson P.M."/>
            <person name="Ravichandran K.S."/>
        </authorList>
    </citation>
    <scope>INTERACTION WITH GULP1</scope>
    <scope>MUTAGENESIS OF ASN-4470 AND ASN-4504</scope>
</reference>
<reference key="17">
    <citation type="journal article" date="2002" name="J. Biol. Chem.">
        <title>Platelet-derived growth factor (PDGF)-induced tyrosine phosphorylation of the low density lipoprotein receptor-related protein (LRP). Evidence for integrated co-receptor function between LRP and the PDGF.</title>
        <authorList>
            <person name="Loukinova E."/>
            <person name="Ranganathan S."/>
            <person name="Kuznetsov S."/>
            <person name="Gorlatova N."/>
            <person name="Migliorini M.M."/>
            <person name="Loukinov D."/>
            <person name="Ulery P.G."/>
            <person name="Mikhailenko I."/>
            <person name="Lawrence D.A."/>
            <person name="Strickland D.K."/>
        </authorList>
    </citation>
    <scope>PHOSPHORYLATION AT TYR-4507</scope>
    <scope>MUTAGENESIS OF 4470-ASN--TYR-4473 AND 4504-ASN--TYR-4507</scope>
    <scope>INTERACTION WITH PDGF</scope>
</reference>
<reference key="18">
    <citation type="journal article" date="2002" name="J. Biol. Chem.">
        <title>Proteolytic processing of low density lipoprotein receptor-related protein mediates regulated release of its intracellular domain.</title>
        <authorList>
            <person name="May P."/>
            <person name="Reddy Y.K."/>
            <person name="Herz J."/>
        </authorList>
    </citation>
    <scope>FUNCTION</scope>
    <scope>PROTEOLYTIC PROCESSING</scope>
</reference>
<reference key="19">
    <citation type="journal article" date="2003" name="J. Biol. Chem.">
        <title>The intracellular domain of the low density lipoprotein receptor-related protein modulates transactivation mediated by amyloid precursor protein and Fe65.</title>
        <authorList>
            <person name="Kinoshita A."/>
            <person name="Shah T."/>
            <person name="Tangredi M.M."/>
            <person name="Strickland D.K."/>
            <person name="Hyman B.T."/>
        </authorList>
    </citation>
    <scope>FUNCTION</scope>
    <scope>SUBCELLULAR LOCATION</scope>
</reference>
<reference key="20">
    <citation type="journal article" date="2003" name="Traffic">
        <title>LDL receptor-related proteins in neurodevelopment.</title>
        <authorList>
            <person name="May P."/>
            <person name="Herz J."/>
        </authorList>
    </citation>
    <scope>FUNCTION</scope>
</reference>
<reference key="21">
    <citation type="journal article" date="2004" name="Biochem. J.">
        <title>The mosaic receptor sorLA/LR11 binds components of the plasminogen-activating system and platelet-derived growth factor-BB similarly to LRP1 (low-density lipoprotein receptor-related protein), but mediates slow internalization of bound ligand.</title>
        <authorList>
            <person name="Gliemann J."/>
            <person name="Hermey G."/>
            <person name="Nykjaer A."/>
            <person name="Petersen C.M."/>
            <person name="Jacobsen C."/>
            <person name="Andreasen P.A."/>
        </authorList>
    </citation>
    <scope>INTERACTION WITH LRPAP1; PDGFB; PLAU AND SERPINE1</scope>
</reference>
<reference key="22">
    <citation type="journal article" date="2004" name="Circ. Res.">
        <title>LR11, an LDL receptor gene family member, is a novel regulator of smooth muscle cell migration.</title>
        <authorList>
            <person name="Zhu Y."/>
            <person name="Bujo H."/>
            <person name="Yamazaki H."/>
            <person name="Ohwaki K."/>
            <person name="Jiang M."/>
            <person name="Hirayama S."/>
            <person name="Kanaki T."/>
            <person name="Shibasaki M."/>
            <person name="Takahashi K."/>
            <person name="Schneider W.J."/>
            <person name="Saito Y."/>
        </authorList>
    </citation>
    <scope>INTERACTION WITH PLAUR</scope>
</reference>
<reference key="23">
    <citation type="journal article" date="2004" name="J. Biol. Chem.">
        <title>Serine and threonine phosphorylation of the low density lipoprotein receptor-related protein by protein kinase Calpha regulates endocytosis and association with adaptor molecules.</title>
        <authorList>
            <person name="Ranganathan S."/>
            <person name="Liu C.-X."/>
            <person name="Migliorini M.M."/>
            <person name="Von Arnim C.A.F."/>
            <person name="Peltan I.D."/>
            <person name="Mikhailenko I."/>
            <person name="Hyman B.T."/>
            <person name="Strickland D.K."/>
        </authorList>
    </citation>
    <scope>PHOSPHORYLATION AT THR-4460; SER-4517; SER-4520 AND SER-4523</scope>
    <scope>MUTAGENESIS OF THR-4460; THR-4472; SER-4517; SER-4520 AND SER-4523</scope>
    <scope>INTERACTION WITH SHC1; GULP1 AND DAB1</scope>
</reference>
<reference key="24">
    <citation type="journal article" date="2005" name="J. Mol. Biol.">
        <title>Functions of sorting nexin 17 domains and recognition motif for P-selectin trafficking.</title>
        <authorList>
            <person name="Knauth P."/>
            <person name="Schlueter T."/>
            <person name="Czubayko M."/>
            <person name="Kirsch C."/>
            <person name="Florian V."/>
            <person name="Schreckenberger S."/>
            <person name="Hahn H."/>
            <person name="Bohnensack R."/>
        </authorList>
    </citation>
    <scope>INTERACTION WITH SNX17</scope>
</reference>
<reference key="25">
    <citation type="journal article" date="2005" name="J. Proteome Res.">
        <title>Human plasma N-glycoproteome analysis by immunoaffinity subtraction, hydrazide chemistry, and mass spectrometry.</title>
        <authorList>
            <person name="Liu T."/>
            <person name="Qian W.-J."/>
            <person name="Gritsenko M.A."/>
            <person name="Camp D.G. II"/>
            <person name="Monroe M.E."/>
            <person name="Moore R.J."/>
            <person name="Smith R.D."/>
        </authorList>
    </citation>
    <scope>GLYCOSYLATION [LARGE SCALE ANALYSIS] AT ASN-446; ASN-729; ASN-2127 AND ASN-3048</scope>
    <source>
        <tissue>Plasma</tissue>
    </source>
</reference>
<reference key="26">
    <citation type="journal article" date="2007" name="Mol. Cell. Proteomics">
        <title>Identification of the ligands of protein interaction domains through a functional approach.</title>
        <authorList>
            <person name="Caratu G."/>
            <person name="Allegra D."/>
            <person name="Bimonte M."/>
            <person name="Schiattarella G.G."/>
            <person name="D'Ambrosio C."/>
            <person name="Scaloni A."/>
            <person name="Napolitano M."/>
            <person name="Russo T."/>
            <person name="Zambrano N."/>
        </authorList>
    </citation>
    <scope>IDENTIFICATION IN A COMPLEX WITH CUBN AND PID1</scope>
    <scope>INTERACTION WITH CUBN AND PID1</scope>
</reference>
<reference key="27">
    <citation type="journal article" date="2009" name="J. Proteome Res.">
        <title>Glycoproteomics analysis of human liver tissue by combination of multiple enzyme digestion and hydrazide chemistry.</title>
        <authorList>
            <person name="Chen R."/>
            <person name="Jiang X."/>
            <person name="Sun D."/>
            <person name="Han G."/>
            <person name="Wang F."/>
            <person name="Ye M."/>
            <person name="Wang L."/>
            <person name="Zou H."/>
        </authorList>
    </citation>
    <scope>GLYCOSYLATION [LARGE SCALE ANALYSIS] AT ASN-446; ASN-729; ASN-1511; ASN-1575; ASN-1616; ASN-1645; ASN-1763; ASN-2127; ASN-2815; ASN-3048; ASN-3089; ASN-3488; ASN-3788; ASN-3953; ASN-4075 AND ASN-4125</scope>
    <source>
        <tissue>Liver</tissue>
    </source>
</reference>
<reference key="28">
    <citation type="journal article" date="2009" name="Mol. Cell. Proteomics">
        <title>A strategy for precise and large scale identification of core fucosylated glycoproteins.</title>
        <authorList>
            <person name="Jia W."/>
            <person name="Lu Z."/>
            <person name="Fu Y."/>
            <person name="Wang H.P."/>
            <person name="Wang L.H."/>
            <person name="Chi H."/>
            <person name="Yuan Z.F."/>
            <person name="Zheng Z.B."/>
            <person name="Song L.N."/>
            <person name="Han H.H."/>
            <person name="Liang Y.M."/>
            <person name="Wang J.L."/>
            <person name="Cai Y."/>
            <person name="Zhang Y.K."/>
            <person name="Deng Y.L."/>
            <person name="Ying W.T."/>
            <person name="He S.M."/>
            <person name="Qian X.H."/>
        </authorList>
    </citation>
    <scope>GLYCOSYLATION AT ASN-729 AND ASN-1511</scope>
</reference>
<reference key="29">
    <citation type="journal article" date="2011" name="BMC Syst. Biol.">
        <title>Initial characterization of the human central proteome.</title>
        <authorList>
            <person name="Burkard T.R."/>
            <person name="Planyavsky M."/>
            <person name="Kaupe I."/>
            <person name="Breitwieser F.P."/>
            <person name="Buerckstuemmer T."/>
            <person name="Bennett K.L."/>
            <person name="Superti-Furga G."/>
            <person name="Colinge J."/>
        </authorList>
    </citation>
    <scope>IDENTIFICATION BY MASS SPECTROMETRY [LARGE SCALE ANALYSIS]</scope>
</reference>
<reference key="30">
    <citation type="journal article" date="2014" name="J. Proteomics">
        <title>An enzyme assisted RP-RPLC approach for in-depth analysis of human liver phosphoproteome.</title>
        <authorList>
            <person name="Bian Y."/>
            <person name="Song C."/>
            <person name="Cheng K."/>
            <person name="Dong M."/>
            <person name="Wang F."/>
            <person name="Huang J."/>
            <person name="Sun D."/>
            <person name="Wang L."/>
            <person name="Ye M."/>
            <person name="Zou H."/>
        </authorList>
    </citation>
    <scope>PHOSPHORYLATION [LARGE SCALE ANALYSIS] AT SER-4520</scope>
    <scope>IDENTIFICATION BY MASS SPECTROMETRY [LARGE SCALE ANALYSIS]</scope>
    <source>
        <tissue>Liver</tissue>
    </source>
</reference>
<reference key="31">
    <citation type="journal article" date="2020" name="Nature">
        <title>LRP1 is a master regulator of tau uptake and spread.</title>
        <authorList>
            <person name="Rauch J.N."/>
            <person name="Luna G."/>
            <person name="Guzman E."/>
            <person name="Challis C."/>
            <person name="Sibih Y.E."/>
            <person name="Leshuk C."/>
            <person name="Hernandez I."/>
            <person name="Wegmann S."/>
            <person name="Hyman B.T."/>
            <person name="Gradinaru V."/>
            <person name="Kampmann M."/>
            <person name="Kosik K.S."/>
        </authorList>
    </citation>
    <scope>FUNCTION</scope>
    <scope>INTERACTION WITH LRPAP1 AND MAPT1</scope>
</reference>
<reference key="32">
    <citation type="journal article" date="2021" name="Cell">
        <title>Lrp1 is a host entry factor for Rift Valley fever virus.</title>
        <authorList>
            <person name="Ganaie S.S."/>
            <person name="Schwarz M.M."/>
            <person name="McMillen C.M."/>
            <person name="Price D.A."/>
            <person name="Feng A.X."/>
            <person name="Albe J.R."/>
            <person name="Wang W."/>
            <person name="Miersch S."/>
            <person name="Orvedahl A."/>
            <person name="Cole A.R."/>
            <person name="Sentmanat M.F."/>
            <person name="Mishra N."/>
            <person name="Boyles D.A."/>
            <person name="Koenig Z.T."/>
            <person name="Kujawa M.R."/>
            <person name="Demers M.A."/>
            <person name="Hoehl R.M."/>
            <person name="Moyle A.B."/>
            <person name="Wagner N.D."/>
            <person name="Stubbs S.H."/>
            <person name="Cardarelli L."/>
            <person name="Teyra J."/>
            <person name="McElroy A."/>
            <person name="Gross M.L."/>
            <person name="Whelan S.P.J."/>
            <person name="Doench J."/>
            <person name="Cui X."/>
            <person name="Brett T.J."/>
            <person name="Sidhu S.S."/>
            <person name="Virgin H.W."/>
            <person name="Egawa T."/>
            <person name="Leung D.W."/>
            <person name="Amarasinghe G.K."/>
            <person name="Hartman A.L."/>
        </authorList>
    </citation>
    <scope>INTERACTION WITH RVFV GLYCOPROTEIN N (MICROBIAL INFECTION)</scope>
</reference>
<reference key="33">
    <citation type="journal article" date="1999" name="J. Biol. Chem.">
        <title>NMR solution structure of complement-like repeat CR8 from the low density lipoprotein receptor-related protein.</title>
        <authorList>
            <person name="Huang W."/>
            <person name="Dolmer K."/>
            <person name="Gettins P.G.W."/>
        </authorList>
    </citation>
    <scope>STRUCTURE BY NMR OF 1059-1100 IN COMPLEX WITH CALCIUM IONS</scope>
    <scope>DISULFIDE BONDS</scope>
</reference>
<reference key="34">
    <citation type="journal article" date="2000" name="J. Biol. Chem.">
        <title>NMR solution structure of complement-like repeat CR3 from the low density lipoprotein receptor-related protein. Evidence for specific binding to the receptor binding domain of human alpha(2)-macroglobulin.</title>
        <authorList>
            <person name="Dolmer K."/>
            <person name="Huang W."/>
            <person name="Gettins P.G.W."/>
        </authorList>
    </citation>
    <scope>STRUCTURE BY NMR OF 851-893 IN COMPLEX WITH CALCIUM IONS</scope>
    <scope>DISULFIDE BONDS</scope>
</reference>
<reference key="35">
    <citation type="journal article" date="2001" name="Biochemistry">
        <title>Calcium coordination and pH dependence of the calcium affinity of ligand-binding repeat CR7 from the LRP. Comparison with related domains from the LRP and the LDL receptor.</title>
        <authorList>
            <person name="Simonovic M."/>
            <person name="Dolmer K."/>
            <person name="Huang W."/>
            <person name="Strickland D.K."/>
            <person name="Volz K."/>
            <person name="Gettins P.G."/>
        </authorList>
    </citation>
    <scope>X-RAY CRYSTALLOGRAPHY (1.85 ANGSTROMS) OF 1012-1054 IN COMPLEX WITH CALCIUM IONS</scope>
    <scope>DISULFIDE BONDS</scope>
</reference>
<reference key="36">
    <citation type="journal article" date="2006" name="J. Mol. Biol.">
        <title>Binding site structure of one LRP-RAP complex: implications for a common ligand-receptor binding motif.</title>
        <authorList>
            <person name="Jensen G.A."/>
            <person name="Andersen O.M.J.J."/>
            <person name="Bonvin A.M."/>
            <person name="Bjerrum-Bohr I."/>
            <person name="Etzerodt M."/>
            <person name="Thoegersen H.C."/>
            <person name="O'Shea C."/>
            <person name="Poulsen F.M."/>
            <person name="Kragelund B.B."/>
        </authorList>
    </citation>
    <scope>STRUCTURE BY NMR OF 932-1013 IN COMPLEX WITH LRPAP1 AND CALCIUM IONS</scope>
    <scope>DISULFIDE BONDS</scope>
</reference>
<reference key="37">
    <citation type="journal article" date="2006" name="Science">
        <title>The consensus coding sequences of human breast and colorectal cancers.</title>
        <authorList>
            <person name="Sjoeblom T."/>
            <person name="Jones S."/>
            <person name="Wood L.D."/>
            <person name="Parsons D.W."/>
            <person name="Lin J."/>
            <person name="Barber T.D."/>
            <person name="Mandelker D."/>
            <person name="Leary R.J."/>
            <person name="Ptak J."/>
            <person name="Silliman N."/>
            <person name="Szabo S."/>
            <person name="Buckhaults P."/>
            <person name="Farrell C."/>
            <person name="Meeh P."/>
            <person name="Markowitz S.D."/>
            <person name="Willis J."/>
            <person name="Dawson D."/>
            <person name="Willson J.K.V."/>
            <person name="Gazdar A.F."/>
            <person name="Hartigan J."/>
            <person name="Wu L."/>
            <person name="Liu C."/>
            <person name="Parmigiani G."/>
            <person name="Park B.H."/>
            <person name="Bachman K.E."/>
            <person name="Papadopoulos N."/>
            <person name="Vogelstein B."/>
            <person name="Kinzler K.W."/>
            <person name="Velculescu V.E."/>
        </authorList>
    </citation>
    <scope>VARIANTS [LARGE SCALE ANALYSIS] LYS-869 AND HIS-3760</scope>
</reference>
<reference key="38">
    <citation type="journal article" date="2012" name="N. Engl. J. Med.">
        <title>Diagnostic exome sequencing in persons with severe intellectual disability.</title>
        <authorList>
            <person name="de Ligt J."/>
            <person name="Willemsen M.H."/>
            <person name="van Bon B.W."/>
            <person name="Kleefstra T."/>
            <person name="Yntema H.G."/>
            <person name="Kroes T."/>
            <person name="Vulto-van Silfhout A.T."/>
            <person name="Koolen D.A."/>
            <person name="de Vries P."/>
            <person name="Gilissen C."/>
            <person name="del Rosario M."/>
            <person name="Hoischen A."/>
            <person name="Scheffer H."/>
            <person name="de Vries B.B."/>
            <person name="Brunner H.G."/>
            <person name="Veltman J.A."/>
            <person name="Vissers L.E."/>
        </authorList>
    </citation>
    <scope>VARIANT GLN-3258</scope>
</reference>
<reference key="39">
    <citation type="journal article" date="2015" name="J. Med. Genet.">
        <title>Whole exome sequencing identifies LRP1 as a pathogenic gene in autosomal recessive keratosis pilaris atrophicans.</title>
        <authorList>
            <person name="Klar J."/>
            <person name="Schuster J."/>
            <person name="Khan T.N."/>
            <person name="Jameel M."/>
            <person name="Maebert K."/>
            <person name="Forsberg L."/>
            <person name="Baig S.A."/>
            <person name="Baig S.M."/>
            <person name="Dahl N."/>
        </authorList>
    </citation>
    <scope>VARIANT KPA ARG-1245</scope>
    <scope>CHARACTERIZATION OF VARIANT KPA ARG-1245</scope>
    <scope>FUNCTION</scope>
    <scope>INVOLVEMENT IN KPA</scope>
</reference>
<reference key="40">
    <citation type="journal article" date="2022" name="Proc. Natl. Acad. Sci. U.S.A.">
        <title>Heterozygous LRP1 deficiency causes developmental dysplasia of the hip by impairing triradiate chondrocytes differentiation due to inhibition of autophagy.</title>
        <authorList>
            <person name="Yan W."/>
            <person name="Zheng L."/>
            <person name="Xu X."/>
            <person name="Hao Z."/>
            <person name="Zhang Y."/>
            <person name="Lu J."/>
            <person name="Sun Z."/>
            <person name="Dai J."/>
            <person name="Shi D."/>
            <person name="Guo B."/>
            <person name="Jiang Q."/>
        </authorList>
    </citation>
    <scope>INVOLVEMENT IN DDH3</scope>
    <scope>VARIANTS DDH3 ALA-224; MET-725; TRP-1783; LYS-2129; SER-2867; ARG-3814 AND GLN-4192</scope>
    <scope>CHARACTERIZATION OF VARIANT DDH3 TRP-1783</scope>
</reference>
<gene>
    <name evidence="43" type="primary">LRP1</name>
    <name type="synonym">A2MR</name>
    <name type="synonym">APR</name>
</gene>
<keyword id="KW-0002">3D-structure</keyword>
<keyword id="KW-0007">Acetylation</keyword>
<keyword id="KW-0025">Alternative splicing</keyword>
<keyword id="KW-0106">Calcium</keyword>
<keyword id="KW-1003">Cell membrane</keyword>
<keyword id="KW-0168">Coated pit</keyword>
<keyword id="KW-0963">Cytoplasm</keyword>
<keyword id="KW-0206">Cytoskeleton</keyword>
<keyword id="KW-0217">Developmental protein</keyword>
<keyword id="KW-0903">Direct protein sequencing</keyword>
<keyword id="KW-0225">Disease variant</keyword>
<keyword id="KW-1015">Disulfide bond</keyword>
<keyword id="KW-0245">EGF-like domain</keyword>
<keyword id="KW-0254">Endocytosis</keyword>
<keyword id="KW-0325">Glycoprotein</keyword>
<keyword id="KW-0333">Golgi apparatus</keyword>
<keyword id="KW-0945">Host-virus interaction</keyword>
<keyword id="KW-0472">Membrane</keyword>
<keyword id="KW-0479">Metal-binding</keyword>
<keyword id="KW-0539">Nucleus</keyword>
<keyword id="KW-0597">Phosphoprotein</keyword>
<keyword id="KW-1267">Proteomics identification</keyword>
<keyword id="KW-0675">Receptor</keyword>
<keyword id="KW-1185">Reference proteome</keyword>
<keyword id="KW-0677">Repeat</keyword>
<keyword id="KW-0732">Signal</keyword>
<keyword id="KW-0812">Transmembrane</keyword>
<keyword id="KW-1133">Transmembrane helix</keyword>
<accession>Q07954</accession>
<accession>Q2PP12</accession>
<accession>Q86SW0</accession>
<accession>Q8IVG8</accession>
<evidence type="ECO:0000250" key="1"/>
<evidence type="ECO:0000250" key="2">
    <source>
        <dbReference type="UniProtKB" id="G3V928"/>
    </source>
</evidence>
<evidence type="ECO:0000250" key="3">
    <source>
        <dbReference type="UniProtKB" id="Q91ZX7"/>
    </source>
</evidence>
<evidence type="ECO:0000255" key="4"/>
<evidence type="ECO:0000255" key="5">
    <source>
        <dbReference type="PROSITE-ProRule" id="PRU00076"/>
    </source>
</evidence>
<evidence type="ECO:0000255" key="6">
    <source>
        <dbReference type="PROSITE-ProRule" id="PRU00124"/>
    </source>
</evidence>
<evidence type="ECO:0000269" key="7">
    <source>
    </source>
</evidence>
<evidence type="ECO:0000269" key="8">
    <source>
    </source>
</evidence>
<evidence type="ECO:0000269" key="9">
    <source>
    </source>
</evidence>
<evidence type="ECO:0000269" key="10">
    <source>
    </source>
</evidence>
<evidence type="ECO:0000269" key="11">
    <source>
    </source>
</evidence>
<evidence type="ECO:0000269" key="12">
    <source>
    </source>
</evidence>
<evidence type="ECO:0000269" key="13">
    <source>
    </source>
</evidence>
<evidence type="ECO:0000269" key="14">
    <source>
    </source>
</evidence>
<evidence type="ECO:0000269" key="15">
    <source>
    </source>
</evidence>
<evidence type="ECO:0000269" key="16">
    <source>
    </source>
</evidence>
<evidence type="ECO:0000269" key="17">
    <source>
    </source>
</evidence>
<evidence type="ECO:0000269" key="18">
    <source>
    </source>
</evidence>
<evidence type="ECO:0000269" key="19">
    <source>
    </source>
</evidence>
<evidence type="ECO:0000269" key="20">
    <source>
    </source>
</evidence>
<evidence type="ECO:0000269" key="21">
    <source>
    </source>
</evidence>
<evidence type="ECO:0000269" key="22">
    <source>
    </source>
</evidence>
<evidence type="ECO:0000269" key="23">
    <source>
    </source>
</evidence>
<evidence type="ECO:0000269" key="24">
    <source>
    </source>
</evidence>
<evidence type="ECO:0000269" key="25">
    <source>
    </source>
</evidence>
<evidence type="ECO:0000269" key="26">
    <source>
    </source>
</evidence>
<evidence type="ECO:0000269" key="27">
    <source>
    </source>
</evidence>
<evidence type="ECO:0000269" key="28">
    <source>
    </source>
</evidence>
<evidence type="ECO:0000269" key="29">
    <source>
    </source>
</evidence>
<evidence type="ECO:0000269" key="30">
    <source>
    </source>
</evidence>
<evidence type="ECO:0000269" key="31">
    <source>
    </source>
</evidence>
<evidence type="ECO:0000269" key="32">
    <source>
    </source>
</evidence>
<evidence type="ECO:0000269" key="33">
    <source>
    </source>
</evidence>
<evidence type="ECO:0000269" key="34">
    <source>
    </source>
</evidence>
<evidence type="ECO:0000269" key="35">
    <source>
    </source>
</evidence>
<evidence type="ECO:0000269" key="36">
    <source>
    </source>
</evidence>
<evidence type="ECO:0000269" key="37">
    <source>
    </source>
</evidence>
<evidence type="ECO:0000269" key="38">
    <source ref="4"/>
</evidence>
<evidence type="ECO:0000303" key="39">
    <source>
    </source>
</evidence>
<evidence type="ECO:0000303" key="40">
    <source>
    </source>
</evidence>
<evidence type="ECO:0000305" key="41"/>
<evidence type="ECO:0000305" key="42">
    <source>
    </source>
</evidence>
<evidence type="ECO:0000312" key="43">
    <source>
        <dbReference type="HGNC" id="HGNC:6692"/>
    </source>
</evidence>
<evidence type="ECO:0007744" key="44">
    <source>
    </source>
</evidence>
<evidence type="ECO:0007829" key="45">
    <source>
        <dbReference type="PDB" id="1CR8"/>
    </source>
</evidence>
<evidence type="ECO:0007829" key="46">
    <source>
        <dbReference type="PDB" id="1D2L"/>
    </source>
</evidence>
<evidence type="ECO:0007829" key="47">
    <source>
        <dbReference type="PDB" id="1J8E"/>
    </source>
</evidence>
<evidence type="ECO:0007829" key="48">
    <source>
        <dbReference type="PDB" id="2FYJ"/>
    </source>
</evidence>
<evidence type="ECO:0007829" key="49">
    <source>
        <dbReference type="PDB" id="2FYL"/>
    </source>
</evidence>
<evidence type="ECO:0007829" key="50">
    <source>
        <dbReference type="PDB" id="2KNX"/>
    </source>
</evidence>
<evidence type="ECO:0007829" key="51">
    <source>
        <dbReference type="PDB" id="2KNY"/>
    </source>
</evidence>
<sequence length="4544" mass="504606">MLTPPLLLLLPLLSALVAAAIDAPKTCSPKQFACRDQITCISKGWRCDGERDCPDGSDEAPEICPQSKAQRCQPNEHNCLGTELCVPMSRLCNGVQDCMDGSDEGPHCRELQGNCSRLGCQHHCVPTLDGPTCYCNSSFQLQADGKTCKDFDECSVYGTCSQLCTNTDGSFICGCVEGYLLQPDNRSCKAKNEPVDRPPVLLIANSQNILATYLSGAQVSTITPTSTRQTTAMDFSYANETVCWVHVGDSAAQTQLKCARMPGLKGFVDEHTINISLSLHHVEQMAIDWLTGNFYFVDDIDDRIFVCNRNGDTCVTLLDLELYNPKGIALDPAMGKVFFTDYGQIPKVERCDMDGQNRTKLVDSKIVFPHGITLDLVSRLVYWADAYLDYIEVVDYEGKGRQTIIQGILIEHLYGLTVFENYLYATNSDNANAQQKTSVIRVNRFNSTEYQVVTRVDKGGALHIYHQRRQPRVRSHACENDQYGKPGGCSDICLLANSHKARTCRCRSGFSLGSDGKSCKKPEHELFLVYGKGRPGIIRGMDMGAKVPDEHMIPIENLMNPRALDFHAETGFIYFADTTSYLIGRQKIDGTERETILKDGIHNVEGVAVDWMGDNLYWTDDGPKKTISVARLEKAAQTRKTLIEGKMTHPRAIVVDPLNGWMYWTDWEEDPKDSRRGRLERAWMDGSHRDIFVTSKTVLWPNGLSLDIPAGRLYWVDAFYDRIETILLNGTDRKIVYEGPELNHAFGLCHHGNYLFWTEYRSGSVYRLERGVGGAPPTVTLLRSERPPIFEIRMYDAQQQQVGTNKCRVNNGGCSSLCLATPGSRQCACAEDQVLDADGVTCLANPSYVPPPQCQPGEFACANSRCIQERWKCDGDNDCLDNSDEAPALCHQHTCPSDRFKCENNRCIPNRWLCDGDNDCGNSEDESNATCSARTCPPNQFSCASGRCIPISWTCDLDDDCGDRSDESASCAYPTCFPLTQFTCNNGRCININWRCDNDNDCGDNSDEAGCSHSCSSTQFKCNSGRCIPEHWTCDGDNDCGDYSDETHANCTNQATRPPGGCHTDEFQCRLDGLCIPLRWRCDGDTDCMDSSDEKSCEGVTHVCDPSVKFGCKDSARCISKAWVCDGDNDCEDNSDEENCESLACRPPSHPCANNTSVCLPPDKLCDGNDDCGDGSDEGELCDQCSLNNGGCSHNCSVAPGEGIVCSCPLGMELGPDNHTCQIQSYCAKHLKCSQKCDQNKFSVKCSCYEGWVLEPDGESCRSLDPFKPFIIFSNRHEIRRIDLHKGDYSVLVPGLRNTIALDFHLSQSALYWTDVVEDKIYRGKLLDNGALTSFEVVIQYGLATPEGLAVDWIAGNIYWVESNLDQIEVAKLDGTLRTTLLAGDIEHPRAIALDPRDGILFWTDWDASLPRIEAASMSGAGRRTVHRETGSGGWPNGLTVDYLEKRILWIDARSDAIYSARYDGSGHMEVLRGHEFLSHPFAVTLYGGEVYWTDWRTNTLAKANKWTGHNVTVVQRTNTQPFDLQVYHPSRQPMAPNPCEANGGQGPCSHLCLINYNRTVSCACPHLMKLHKDNTTCYEFKKFLLYARQMEIRGVDLDAPYYNYIISFTVPDIDNVTVLDYDAREQRVYWSDVRTQAIKRAFINGTGVETVVSADLPNAHGLAVDWVSRNLFWTSYDTNKKQINVARLDGSFKNAVVQGLEQPHGLVVHPLRGKLYWTDGDNISMANMDGSNRTLLFSGQKGPVGLAIDFPESKLYWISSGNHTINRCNLDGSGLEVIDAMRSQLGKATALAIMGDKLWWADQVSEKMGTCSKADGSGSVVLRNSTTLVMHMKVYDESIQLDHKGTNPCSVNNGDCSQLCLPTSETTRSCMCTAGYSLRSGQQACEGVGSFLLYSVHEGIRGIPLDPNDKSDALVPVSGTSLAVGIDFHAENDTIYWVDMGLSTISRAKRDQTWREDVVTNGIGRVEGIAVDWIAGNIYWTDQGFDVIEVARLNGSFRYVVISQGLDKPRAITVHPEKGYLFWTEWGQYPRIERSRLDGTERVVLVNVSISWPNGISVDYQDGKLYWCDARTDKIERIDLETGENREVVLSSNNMDMFSVSVFEDFIYWSDRTHANGSIKRGSKDNATDSVPLRTGIGVQLKDIKVFNRDRQKGTNVCAVANGGCQQLCLYRGRGQRACACAHGMLAEDGASCREYAGYLLYSERTILKSIHLSDERNLNAPVQPFEDPEHMKNVIALAFDYRAGTSPGTPNRIFFSDIHFGNIQQINDDGSRRITIVENVGSVEGLAYHRGWDTLYWTSYTTSTITRHTVDQTRPGAFERETVITMSGDDHPRAFVLDECQNLMFWTNWNEQHPSIMRAALSGANVLTLIEKDIRTPNGLAIDHRAEKLYFSDATLDKIERCEYDGSHRYVILKSEPVHPFGLAVYGEHIFWTDWVRRAVQRANKHVGSNMKLLRVDIPQQPMGIIAVANDTNSCELSPCRINNGGCQDLCLLTHQGHVNCSCRGGRILQDDLTCRAVNSSCRAQDEFECANGECINFSLTCDGVPHCKDKSDEKPSYCNSRRCKKTFRQCSNGRCVSNMLWCNGADDCGDGSDEIPCNKTACGVGEFRCRDGTCIGNSSRCNQFVDCEDASDEMNCSATDCSSYFRLGVKGVLFQPCERTSLCYAPSWVCDGANDCGDYSDERDCPGVKRPRCPLNYFACPSGRCIPMSWTCDKEDDCEHGEDETHCNKFCSEAQFECQNHRCISKQWLCDGSDDCGDGSDEAAHCEGKTCGPSSFSCPGTHVCVPERWLCDGDKDCADGADESIAAGCLYNSTCDDREFMCQNRQCIPKHFVCDHDRDCADGSDESPECEYPTCGPSEFRCANGRCLSSRQWECDGENDCHDQSDEAPKNPHCTSQEHKCNASSQFLCSSGRCVAEALLCNGQDDCGDSSDERGCHINECLSRKLSGCSQDCEDLKIGFKCRCRPGFRLKDDGRTCADVDECSTTFPCSQRCINTHGSYKCLCVEGYAPRGGDPHSCKAVTDEEPFLIFANRYYLRKLNLDGSNYTLLKQGLNNAVALDFDYREQMIYWTDVTTQGSMIRRMHLNGSNVQVLHRTGLSNPDGLAVDWVGGNLYWCDKGRDTIEVSKLNGAYRTVLVSSGLREPRALVVDVQNGYLYWTDWGDHSLIGRIGMDGSSRSVIVDTKITWPNGLTLDYVTERIYWADAREDYIEFASLDGSNRHVVLSQDIPHIFALTLFEDYVYWTDWETKSINRAHKTTGTNKTLLISTLHRPMDLHVFHALRQPDVPNHPCKVNNGGCSNLCLLSPGGGHKCACPTNFYLGSDGRTCVSNCTASQFVCKNDKCIPFWWKCDTEDDCGDHSDEPPDCPEFKCRPGQFQCSTGICTNPAFICDGDNDCQDNSDEANCDIHVCLPSQFKCTNTNRCIPGIFRCNGQDNCGDGEDERDCPEVTCAPNQFQCSITKRCIPRVWVCDRDNDCVDGSDEPANCTQMTCGVDEFRCKDSGRCIPARWKCDGEDDCGDGSDEPKEECDERTCEPYQFRCKNNRCVPGRWQCDYDNDCGDNSDEESCTPRPCSESEFSCANGRCIAGRWKCDGDHDCADGSDEKDCTPRCDMDQFQCKSGHCIPLRWRCDADADCMDGSDEEACGTGVRTCPLDEFQCNNTLCKPLAWKCDGEDDCGDNSDENPEECARFVCPPNRPFRCKNDRVCLWIGRQCDGTDNCGDGTDEEDCEPPTAHTTHCKDKKEFLCRNQRCLSSSLRCNMFDDCGDGSDEEDCSIDPKLTSCATNASICGDEARCVRTEKAAYCACRSGFHTVPGQPGCQDINECLRFGTCSQLCNNTKGGHLCSCARNFMKTHNTCKAEGSEYQVLYIADDNEIRSLFPGHPHSAYEQAFQGDESVRIDAMDVHVKAGRVYWTNWHTGTISYRSLPPAAPPTTSNRHRRQIDRGVTHLNISGLKMPRGIAIDWVAGNVYWTDSGRDVIEVAQMKGENRKTLISGMIDEPHAIVVDPLRGTMYWSDWGNHPKIETAAMDGTLRETLVQDNIQWPTGLAVDYHNERLYWADAKLSVIGSIRLNGTDPIVAADSKRGLSHPFSIDVFEDYIYGVTYINNRVFKIHKFGHSPLVNLTGGLSHASDVVLYHQHKQPEVTNPCDRKKCEWLCLLSPSGPVCTCPNGKRLDNGTCVPVPSPTPPPDAPRPGTCNLQCFNGGSCFLNARRQPKCRCQPRYTGDKCELDQCWEHCRNGGTCAASPSGMPTCRCPTGFTGPKCTQQVCAGYCANNSTCTVNQGNQPQCRCLPGFLGDRCQYRQCSGYCENFGTCQMAADGSRQCRCTAYFEGSRCEVNKCSRCLEGACVVNKQSGDVTCNCTDGRVAPSCLTCVGHCSNGGSCTMNSKMMPECQCPPHMTGPRCEEHVFSQQQPGHIASILIPLLLLLLLVLVAGVVFWYKRRVQGAKGFQHQRMTNGAMNVEIGNPTYKMYEGGEPDDVGGLLDADFALDPDKPTNFTNPVYATLYMGGHGSRHSLASTDEKRELLGRGPEDEIGDPLA</sequence>
<proteinExistence type="evidence at protein level"/>
<protein>
    <recommendedName>
        <fullName evidence="41">Prolow-density lipoprotein receptor-related protein 1</fullName>
        <shortName>LRP-1</shortName>
    </recommendedName>
    <alternativeName>
        <fullName evidence="40">Alpha-2-macroglobulin receptor</fullName>
        <shortName>A2MR</shortName>
    </alternativeName>
    <alternativeName>
        <fullName>Apolipoprotein E receptor</fullName>
        <shortName>APOER</shortName>
    </alternativeName>
    <cdAntigenName>CD91</cdAntigenName>
    <component>
        <recommendedName>
            <fullName>Low-density lipoprotein receptor-related protein 1 85 kDa subunit</fullName>
            <shortName>LRP-85</shortName>
        </recommendedName>
    </component>
    <component>
        <recommendedName>
            <fullName>Low-density lipoprotein receptor-related protein 1 515 kDa subunit</fullName>
            <shortName>LRP-515</shortName>
        </recommendedName>
    </component>
    <component>
        <recommendedName>
            <fullName>Low-density lipoprotein receptor-related protein 1 intracellular domain</fullName>
            <shortName>LRPICD</shortName>
        </recommendedName>
    </component>
</protein>
<organism>
    <name type="scientific">Homo sapiens</name>
    <name type="common">Human</name>
    <dbReference type="NCBI Taxonomy" id="9606"/>
    <lineage>
        <taxon>Eukaryota</taxon>
        <taxon>Metazoa</taxon>
        <taxon>Chordata</taxon>
        <taxon>Craniata</taxon>
        <taxon>Vertebrata</taxon>
        <taxon>Euteleostomi</taxon>
        <taxon>Mammalia</taxon>
        <taxon>Eutheria</taxon>
        <taxon>Euarchontoglires</taxon>
        <taxon>Primates</taxon>
        <taxon>Haplorrhini</taxon>
        <taxon>Catarrhini</taxon>
        <taxon>Hominidae</taxon>
        <taxon>Homo</taxon>
    </lineage>
</organism>
<comment type="function">
    <text evidence="3 13 14 15 25 31 32 36">Endocytic receptor involved in endocytosis and in phagocytosis of apoptotic cells (PubMed:11907044, PubMed:12713657). Required for early embryonic development (By similarity). Involved in cellular lipid homeostasis. Involved in the plasma clearance of chylomicron remnants and activated LRPAP1 (alpha 2-macroglobulin), as well as the local metabolism of complexes between plasminogen activators and their endogenous inhibitors. Acts as an LRPAP1 alpha-2-macroglobulin receptor (PubMed:1702392, PubMed:26142438). Acts as TAU/MAPT receptor and controls the endocytosis of TAU/MAPT as well as its subsequent spread (PubMed:32296178). May modulate cellular events, such as APP metabolism, kinase-dependent intracellular signaling, neuronal calcium signaling as well as neurotransmission (PubMed:12888553). Also acts as a receptor for IGFBP3 to mediate cell growth inhibition (PubMed:9252371).</text>
</comment>
<comment type="function">
    <text evidence="21">(Microbial infection) Functions as a receptor for Pseudomonas aeruginosa exotoxin A.</text>
</comment>
<comment type="subunit">
    <text evidence="3 9 10 12 16 17 18 19 20 23 26 32 36">Heterodimer of an 85-kDa membrane-bound carboxyl subunit and a non-covalently attached 515-kDa N-terminal subunit. Intracellular domain interacts with MAFB (By similarity). Found in a complex with PID1/PCLI1, LRP1 and CUBNI (PubMed:17124247). Interacts with SNX17, PID1/PCLI1, PDGF and CUBN. The intracellular domain interacts with SHC1, GULP1 and DAB1. Can weakly interact (via NPXY motif) with DAB2 (via PID domain); the interaction is enhanced by tyrosine phosphorylation of the NPXY motif. Interacts with MDK; promotes neuronal survival (PubMed:10772929). Interacts with LRPAP1; this interaction is followed by rapid internalization (PubMed:15053742, PubMed:16938309, PubMed:32296178). Interacts with uPA/PLAU and PAI1/SERPINE1, either individually or in complex with each other, leading to rapid endocytosis; this interaction is abolished in the presence of LRPAP1/RAP (PubMed:1423604, PubMed:15053742). Also interacts with tPA/PLAT alone or in complex with SERPINE1 (PubMed:15053742). Interacts with the urokinase receptor PLAUR; this interaction leads to PLAUR internalization and is impaired in the presence of SORL1 (PubMed:14764453). Interacts with PDGFB (PubMed:15053742). Interacts with TAU/MAPT, leading to endocytosis; this interaction is reduced in the presence of LRPAP1/RAP (PubMed:32296178). Interacts with IGFBP3; this interaction mediates cell growth inhibition independently of IGF1 (PubMed:9252371). Interacts with ADGRG6 (By similarity).</text>
</comment>
<comment type="subunit">
    <text evidence="21">(Microbial infection) Interacts with bacterial exotoxins.</text>
</comment>
<comment type="subunit">
    <text evidence="34">(Microbial infection) Interacts with Rift valley fever virus (RVFV) glycoprotein N; this interaction facilitates virus entry.</text>
</comment>
<comment type="interaction">
    <interactant intactId="EBI-1046087">
        <id>Q07954</id>
    </interactant>
    <interactant intactId="EBI-2848814">
        <id>Q92685</id>
        <label>ALG3</label>
    </interactant>
    <organismsDiffer>false</organismsDiffer>
    <experiments>2</experiments>
</comment>
<comment type="interaction">
    <interactant intactId="EBI-1046087">
        <id>Q07954</id>
    </interactant>
    <interactant intactId="EBI-81694">
        <id>O00213</id>
        <label>APBB1</label>
    </interactant>
    <organismsDiffer>false</organismsDiffer>
    <experiments>4</experiments>
</comment>
<comment type="interaction">
    <interactant intactId="EBI-1046087">
        <id>Q07954</id>
    </interactant>
    <interactant intactId="EBI-1222467">
        <id>P02649</id>
        <label>APOE</label>
    </interactant>
    <organismsDiffer>false</organismsDiffer>
    <experiments>23</experiments>
</comment>
<comment type="interaction">
    <interactant intactId="EBI-1046087">
        <id>Q07954</id>
    </interactant>
    <interactant intactId="EBI-80389">
        <id>P78352</id>
        <label>DLG4</label>
    </interactant>
    <organismsDiffer>false</organismsDiffer>
    <experiments>2</experiments>
</comment>
<comment type="interaction">
    <interactant intactId="EBI-1046087">
        <id>Q07954</id>
    </interactant>
    <interactant intactId="EBI-7468784">
        <id>Q15485</id>
        <label>FCN2</label>
    </interactant>
    <organismsDiffer>false</organismsDiffer>
    <experiments>2</experiments>
</comment>
<comment type="interaction">
    <interactant intactId="EBI-1046087">
        <id>Q07954</id>
    </interactant>
    <interactant intactId="EBI-7249937">
        <id>Q12879</id>
        <label>GRIN2A</label>
    </interactant>
    <organismsDiffer>false</organismsDiffer>
    <experiments>2</experiments>
</comment>
<comment type="interaction">
    <interactant intactId="EBI-1046087">
        <id>Q07954</id>
    </interactant>
    <interactant intactId="EBI-715927">
        <id>P30533</id>
        <label>LRPAP1</label>
    </interactant>
    <organismsDiffer>false</organismsDiffer>
    <experiments>5</experiments>
</comment>
<comment type="interaction">
    <interactant intactId="EBI-1046087">
        <id>Q07954</id>
    </interactant>
    <interactant intactId="EBI-5325353">
        <id>P11226</id>
        <label>MBL2</label>
    </interactant>
    <organismsDiffer>false</organismsDiffer>
    <experiments>5</experiments>
</comment>
<comment type="interaction">
    <interactant intactId="EBI-1046087">
        <id>Q07954</id>
    </interactant>
    <interactant intactId="EBI-4567800">
        <id>Q63722</id>
        <label>Jag1</label>
    </interactant>
    <organismsDiffer>true</organismsDiffer>
    <experiments>4</experiments>
</comment>
<comment type="interaction">
    <interactant intactId="EBI-1046087">
        <id>Q07954</id>
    </interactant>
    <interactant intactId="EBI-4567830">
        <id>Q03350</id>
        <label>Thbs2</label>
    </interactant>
    <organismsDiffer>true</organismsDiffer>
    <experiments>2</experiments>
</comment>
<comment type="interaction">
    <interactant intactId="EBI-25833471">
        <id>Q07954-2</id>
    </interactant>
    <interactant intactId="EBI-77613">
        <id>P05067</id>
        <label>APP</label>
    </interactant>
    <organismsDiffer>false</organismsDiffer>
    <experiments>3</experiments>
</comment>
<comment type="interaction">
    <interactant intactId="EBI-25833471">
        <id>Q07954-2</id>
    </interactant>
    <interactant intactId="EBI-718504">
        <id>Q13867</id>
        <label>BLMH</label>
    </interactant>
    <organismsDiffer>false</organismsDiffer>
    <experiments>3</experiments>
</comment>
<comment type="interaction">
    <interactant intactId="EBI-25833471">
        <id>Q07954-2</id>
    </interactant>
    <interactant intactId="EBI-458391">
        <id>P04271</id>
        <label>S100B</label>
    </interactant>
    <organismsDiffer>false</organismsDiffer>
    <experiments>3</experiments>
</comment>
<comment type="interaction">
    <interactant intactId="EBI-25833471">
        <id>Q07954-2</id>
    </interactant>
    <interactant intactId="EBI-357085">
        <id>Q9UNE7</id>
        <label>STUB1</label>
    </interactant>
    <organismsDiffer>false</organismsDiffer>
    <experiments>3</experiments>
</comment>
<comment type="interaction">
    <interactant intactId="EBI-25833471">
        <id>Q07954-2</id>
    </interactant>
    <interactant intactId="EBI-25892332">
        <id>P43405-2</id>
        <label>SYK</label>
    </interactant>
    <organismsDiffer>false</organismsDiffer>
    <experiments>3</experiments>
</comment>
<comment type="interaction">
    <interactant intactId="EBI-25833471">
        <id>Q07954-2</id>
    </interactant>
    <interactant intactId="EBI-11141397">
        <id>Q9UBQ0-2</id>
        <label>VPS29</label>
    </interactant>
    <organismsDiffer>false</organismsDiffer>
    <experiments>3</experiments>
</comment>
<comment type="subcellular location">
    <molecule>Low-density lipoprotein receptor-related protein 1 85 kDa subunit</molecule>
    <subcellularLocation>
        <location>Cell membrane</location>
        <topology>Single-pass type I membrane protein</topology>
    </subcellularLocation>
    <subcellularLocation>
        <location>Membrane</location>
        <location>Coated pit</location>
    </subcellularLocation>
</comment>
<comment type="subcellular location">
    <molecule>Low-density lipoprotein receptor-related protein 1 515 kDa subunit</molecule>
    <subcellularLocation>
        <location>Cell membrane</location>
        <topology>Peripheral membrane protein</topology>
        <orientation>Extracellular side</orientation>
    </subcellularLocation>
    <subcellularLocation>
        <location>Membrane</location>
        <location>Coated pit</location>
    </subcellularLocation>
</comment>
<comment type="subcellular location">
    <molecule>Low-density lipoprotein receptor-related protein 1 intracellular domain</molecule>
    <subcellularLocation>
        <location evidence="15">Cytoplasm</location>
    </subcellularLocation>
    <subcellularLocation>
        <location evidence="15">Nucleus</location>
    </subcellularLocation>
    <text evidence="15">After cleavage, the intracellular domain (LRPICD) is detected both in the cytoplasm and in the nucleus.</text>
</comment>
<comment type="subcellular location">
    <subcellularLocation>
        <location evidence="2">Golgi outpost</location>
    </subcellularLocation>
    <subcellularLocation>
        <location evidence="2">Cytoplasm</location>
        <location evidence="2">Cytoskeleton</location>
        <location evidence="2">Microtubule organizing center</location>
    </subcellularLocation>
    <text evidence="2">Localizes to the postsynaptic Golgi apparatus region, also named Golgi outpost, which shapes dendrite morphology by functioning as sites of acentrosomal microtubule nucleation.</text>
</comment>
<comment type="alternative products">
    <event type="alternative splicing"/>
    <isoform>
        <id>Q07954-1</id>
        <name>1</name>
        <sequence type="displayed"/>
    </isoform>
    <isoform>
        <id>Q07954-2</id>
        <name>2</name>
        <sequence type="described" ref="VSP_056919 VSP_056920"/>
    </isoform>
</comment>
<comment type="tissue specificity">
    <text>Most abundant in liver, brain and lung.</text>
</comment>
<comment type="PTM">
    <text evidence="13 29">Cleaved into a 85 kDa membrane-spanning subunit (LRP-85) and a 515 kDa large extracellular domain (LRP-515) that remains non-covalently associated. Gamma-secretase-dependent cleavage of LRP-85 releases the intracellular domain from the membrane.</text>
</comment>
<comment type="PTM">
    <text>The N-terminus is blocked.</text>
</comment>
<comment type="PTM">
    <text>Phosphorylated on serine and threonine residues.</text>
</comment>
<comment type="PTM">
    <text>Phosphorylated on tyrosine residues upon stimulation with PDGF. Tyrosine phosphorylation promotes interaction with SHC1.</text>
</comment>
<comment type="disease" evidence="31">
    <disease id="DI-04889">
        <name>Keratosis pilaris atrophicans</name>
        <acronym>KPA</acronym>
        <description>A group of rare genodermatoses characterized by keratotic follicular papules, variable degrees of inflammation, and secondary atrophic scarring. Most cases are associated with an atopic diathesis and keratosis pilaris on the extensor extremities. KPA is comprised of three distinct clinical subtypes: keratosis pilaris atrophicans faciei, atrophoderma vermiculatum, and keratosis follicularis spinulosa decalvans. Affected individuals may present with features overlapping the 3 subtypes.</description>
        <dbReference type="MIM" id="604093"/>
    </disease>
    <text>The disease is caused by variants affecting the gene represented in this entry.</text>
</comment>
<comment type="disease" evidence="35">
    <disease id="DI-06830">
        <name>Developmental dysplasia of the hip 3</name>
        <acronym>DDH3</acronym>
        <description>An autosomal dominant form of congenital dysplasia of the hip, a common skeletal anomaly in which the normal seating of the femoral head in the acetabulum is disrupted. Its severity ranges from mild instability of the femoral head with slight capsular laxity, permitting minimal lateral displacement, through moderate lateral displacement of the femoral head, without loss of contact of the head with the acetabulum, up to complete dislocation of the femoral head from the acetabulum.</description>
        <dbReference type="MIM" id="620690"/>
    </disease>
    <text>The disease is caused by variants affecting the gene represented in this entry.</text>
</comment>
<comment type="similarity">
    <text evidence="41">Belongs to the LDLR family.</text>
</comment>
<feature type="signal peptide" evidence="4">
    <location>
        <begin position="1"/>
        <end position="19"/>
    </location>
</feature>
<feature type="chain" id="PRO_0000017317" description="Prolow-density lipoprotein receptor-related protein 1">
    <location>
        <begin position="20"/>
        <end position="4544"/>
    </location>
</feature>
<feature type="chain" id="PRO_0000302750" description="Low-density lipoprotein receptor-related protein 1 515 kDa subunit">
    <location>
        <begin position="20"/>
        <end position="3943" status="uncertain"/>
    </location>
</feature>
<feature type="chain" id="PRO_0000302751" description="Low-density lipoprotein receptor-related protein 1 85 kDa subunit">
    <location>
        <begin position="3944" status="uncertain"/>
        <end position="4544"/>
    </location>
</feature>
<feature type="chain" id="PRO_0000302752" description="Low-density lipoprotein receptor-related protein 1 intracellular domain">
    <location>
        <begin position="4441" status="uncertain"/>
        <end position="4544"/>
    </location>
</feature>
<feature type="topological domain" description="Extracellular" evidence="4">
    <location>
        <begin position="20"/>
        <end position="4419"/>
    </location>
</feature>
<feature type="transmembrane region" description="Helical" evidence="4">
    <location>
        <begin position="4420"/>
        <end position="4444"/>
    </location>
</feature>
<feature type="topological domain" description="Cytoplasmic" evidence="4">
    <location>
        <begin position="4445"/>
        <end position="4544"/>
    </location>
</feature>
<feature type="domain" description="LDL-receptor class A 1" evidence="6">
    <location>
        <begin position="25"/>
        <end position="66"/>
    </location>
</feature>
<feature type="domain" description="LDL-receptor class A 2" evidence="6">
    <location>
        <begin position="70"/>
        <end position="110"/>
    </location>
</feature>
<feature type="domain" description="EGF-like 1" evidence="5">
    <location>
        <begin position="111"/>
        <end position="149"/>
    </location>
</feature>
<feature type="domain" description="EGF-like 2; calcium-binding" evidence="5">
    <location>
        <begin position="150"/>
        <end position="189"/>
    </location>
</feature>
<feature type="repeat" description="LDL-receptor class B 1">
    <location>
        <begin position="292"/>
        <end position="334"/>
    </location>
</feature>
<feature type="repeat" description="LDL-receptor class B 2">
    <location>
        <begin position="335"/>
        <end position="378"/>
    </location>
</feature>
<feature type="repeat" description="LDL-receptor class B 3">
    <location>
        <begin position="379"/>
        <end position="422"/>
    </location>
</feature>
<feature type="domain" description="EGF-like 3" evidence="5">
    <location>
        <begin position="474"/>
        <end position="520"/>
    </location>
</feature>
<feature type="repeat" description="LDL-receptor class B 4">
    <location>
        <begin position="571"/>
        <end position="613"/>
    </location>
</feature>
<feature type="repeat" description="LDL-receptor class B 5">
    <location>
        <begin position="614"/>
        <end position="659"/>
    </location>
</feature>
<feature type="repeat" description="LDL-receptor class B 6">
    <location>
        <begin position="660"/>
        <end position="710"/>
    </location>
</feature>
<feature type="repeat" description="LDL-receptor class B 7">
    <location>
        <begin position="711"/>
        <end position="754"/>
    </location>
</feature>
<feature type="domain" description="EGF-like 4" evidence="5">
    <location>
        <begin position="803"/>
        <end position="843"/>
    </location>
</feature>
<feature type="domain" description="LDL-receptor class A 3" evidence="6">
    <location>
        <begin position="852"/>
        <end position="892"/>
    </location>
</feature>
<feature type="domain" description="LDL-receptor class A 4" evidence="6">
    <location>
        <begin position="893"/>
        <end position="933"/>
    </location>
</feature>
<feature type="domain" description="LDL-receptor class A 5" evidence="6">
    <location>
        <begin position="934"/>
        <end position="973"/>
    </location>
</feature>
<feature type="domain" description="LDL-receptor class A 6" evidence="6">
    <location>
        <begin position="974"/>
        <end position="1013"/>
    </location>
</feature>
<feature type="domain" description="LDL-receptor class A 7" evidence="6">
    <location>
        <begin position="1013"/>
        <end position="1053"/>
    </location>
</feature>
<feature type="domain" description="LDL-receptor class A 8" evidence="6">
    <location>
        <begin position="1060"/>
        <end position="1099"/>
    </location>
</feature>
<feature type="domain" description="LDL-receptor class A 9" evidence="6">
    <location>
        <begin position="1102"/>
        <end position="1142"/>
    </location>
</feature>
<feature type="domain" description="LDL-receptor class A 10" evidence="6">
    <location>
        <begin position="1143"/>
        <end position="1182"/>
    </location>
</feature>
<feature type="domain" description="EGF-like 5" evidence="5">
    <location>
        <begin position="1183"/>
        <end position="1222"/>
    </location>
</feature>
<feature type="domain" description="EGF-like 6" evidence="5">
    <location>
        <begin position="1223"/>
        <end position="1262"/>
    </location>
</feature>
<feature type="repeat" description="LDL-receptor class B 8">
    <location>
        <begin position="1309"/>
        <end position="1355"/>
    </location>
</feature>
<feature type="repeat" description="LDL-receptor class B 9">
    <location>
        <begin position="1356"/>
        <end position="1398"/>
    </location>
</feature>
<feature type="repeat" description="LDL-receptor class B 10">
    <location>
        <begin position="1399"/>
        <end position="1445"/>
    </location>
</feature>
<feature type="repeat" description="LDL-receptor class B 11">
    <location>
        <begin position="1446"/>
        <end position="1490"/>
    </location>
</feature>
<feature type="repeat" description="LDL-receptor class B 12">
    <location>
        <begin position="1491"/>
        <end position="1531"/>
    </location>
</feature>
<feature type="domain" description="EGF-like 7" evidence="5">
    <location>
        <begin position="1536"/>
        <end position="1579"/>
    </location>
</feature>
<feature type="repeat" description="LDL-receptor class B 13">
    <location>
        <begin position="1627"/>
        <end position="1669"/>
    </location>
</feature>
<feature type="repeat" description="LDL-receptor class B 14">
    <location>
        <begin position="1670"/>
        <end position="1713"/>
    </location>
</feature>
<feature type="repeat" description="LDL-receptor class B 15">
    <location>
        <begin position="1714"/>
        <end position="1753"/>
    </location>
</feature>
<feature type="repeat" description="LDL-receptor class B 16">
    <location>
        <begin position="1754"/>
        <end position="1798"/>
    </location>
</feature>
<feature type="domain" description="EGF-like 8" evidence="5">
    <location>
        <begin position="1846"/>
        <end position="1887"/>
    </location>
</feature>
<feature type="repeat" description="LDL-receptor class B 17">
    <location>
        <begin position="1934"/>
        <end position="1976"/>
    </location>
</feature>
<feature type="repeat" description="LDL-receptor class B 18">
    <location>
        <begin position="1977"/>
        <end position="2019"/>
    </location>
</feature>
<feature type="repeat" description="LDL-receptor class B 19">
    <location>
        <begin position="2020"/>
        <end position="2063"/>
    </location>
</feature>
<feature type="repeat" description="LDL-receptor class B 20">
    <location>
        <begin position="2064"/>
        <end position="2107"/>
    </location>
</feature>
<feature type="domain" description="EGF-like 9" evidence="5">
    <location>
        <begin position="2155"/>
        <end position="2195"/>
    </location>
</feature>
<feature type="repeat" description="LDL-receptor class B 21">
    <location>
        <begin position="2253"/>
        <end position="2294"/>
    </location>
</feature>
<feature type="repeat" description="LDL-receptor class B 22">
    <location>
        <begin position="2295"/>
        <end position="2343"/>
    </location>
</feature>
<feature type="repeat" description="LDL-receptor class B 23">
    <location>
        <begin position="2344"/>
        <end position="2388"/>
    </location>
</feature>
<feature type="repeat" description="LDL-receptor class B 24">
    <location>
        <begin position="2389"/>
        <end position="2431"/>
    </location>
</feature>
<feature type="repeat" description="LDL-receptor class B 25">
    <location>
        <begin position="2432"/>
        <end position="2473"/>
    </location>
</feature>
<feature type="domain" description="EGF-like 10" evidence="5">
    <location>
        <begin position="2478"/>
        <end position="2518"/>
    </location>
</feature>
<feature type="domain" description="LDL-receptor class A 11" evidence="6">
    <location>
        <begin position="2522"/>
        <end position="2563"/>
    </location>
</feature>
<feature type="domain" description="LDL-receptor class A 12" evidence="6">
    <location>
        <begin position="2564"/>
        <end position="2602"/>
    </location>
</feature>
<feature type="domain" description="LDL-receptor class A 13" evidence="6">
    <location>
        <begin position="2603"/>
        <end position="2641"/>
    </location>
</feature>
<feature type="domain" description="LDL-receptor class A 14" evidence="6">
    <location>
        <begin position="2642"/>
        <end position="2690"/>
    </location>
</feature>
<feature type="domain" description="LDL-receptor class A 15" evidence="6">
    <location>
        <begin position="2694"/>
        <end position="2732"/>
    </location>
</feature>
<feature type="domain" description="LDL-receptor class A 16" evidence="6">
    <location>
        <begin position="2732"/>
        <end position="2771"/>
    </location>
</feature>
<feature type="domain" description="LDL-receptor class A 17" evidence="6">
    <location>
        <begin position="2772"/>
        <end position="2814"/>
    </location>
</feature>
<feature type="domain" description="LDL-receptor class A 18" evidence="6">
    <location>
        <begin position="2816"/>
        <end position="2855"/>
    </location>
</feature>
<feature type="domain" description="LDL-receptor class A 19" evidence="6">
    <location>
        <begin position="2856"/>
        <end position="2899"/>
    </location>
</feature>
<feature type="domain" description="LDL-receptor class A 20" evidence="6">
    <location>
        <begin position="2902"/>
        <end position="2940"/>
    </location>
</feature>
<feature type="domain" description="EGF-like 11" evidence="5">
    <location>
        <begin position="2941"/>
        <end position="2981"/>
    </location>
</feature>
<feature type="domain" description="EGF-like 12; calcium-binding" evidence="5">
    <location>
        <begin position="2982"/>
        <end position="3022"/>
    </location>
</feature>
<feature type="repeat" description="LDL-receptor class B 26">
    <location>
        <begin position="3069"/>
        <end position="3113"/>
    </location>
</feature>
<feature type="repeat" description="LDL-receptor class B 27">
    <location>
        <begin position="3114"/>
        <end position="3156"/>
    </location>
</feature>
<feature type="repeat" description="LDL-receptor class B 28">
    <location>
        <begin position="3157"/>
        <end position="3200"/>
    </location>
</feature>
<feature type="repeat" description="LDL-receptor class B 29">
    <location>
        <begin position="3201"/>
        <end position="3243"/>
    </location>
</feature>
<feature type="repeat" description="LDL-receptor class B 30">
    <location>
        <begin position="3244"/>
        <end position="3284"/>
    </location>
</feature>
<feature type="domain" description="EGF-like 13" evidence="5">
    <location>
        <begin position="3290"/>
        <end position="3331"/>
    </location>
</feature>
<feature type="domain" description="LDL-receptor class A 21" evidence="6">
    <location>
        <begin position="3332"/>
        <end position="3371"/>
    </location>
</feature>
<feature type="domain" description="LDL-receptor class A 22" evidence="6">
    <location>
        <begin position="3372"/>
        <end position="3410"/>
    </location>
</feature>
<feature type="domain" description="LDL-receptor class A 23" evidence="6">
    <location>
        <begin position="3411"/>
        <end position="3450"/>
    </location>
</feature>
<feature type="domain" description="LDL-receptor class A 24" evidence="6">
    <location>
        <begin position="3451"/>
        <end position="3491"/>
    </location>
</feature>
<feature type="domain" description="LDL-receptor class A 25" evidence="6">
    <location>
        <begin position="3492"/>
        <end position="3533"/>
    </location>
</feature>
<feature type="domain" description="LDL-receptor class A 26" evidence="6">
    <location>
        <begin position="3534"/>
        <end position="3572"/>
    </location>
</feature>
<feature type="domain" description="LDL-receptor class A 27" evidence="6">
    <location>
        <begin position="3573"/>
        <end position="3611"/>
    </location>
</feature>
<feature type="domain" description="LDL-receptor class A 28" evidence="6">
    <location>
        <begin position="3611"/>
        <end position="3649"/>
    </location>
</feature>
<feature type="domain" description="LDL-receptor class A 29" evidence="6">
    <location>
        <begin position="3652"/>
        <end position="3692"/>
    </location>
</feature>
<feature type="domain" description="LDL-receptor class A 30" evidence="6">
    <location>
        <begin position="3693"/>
        <end position="3733"/>
    </location>
</feature>
<feature type="domain" description="LDL-receptor class A 31" evidence="6">
    <location>
        <begin position="3739"/>
        <end position="3778"/>
    </location>
</feature>
<feature type="domain" description="EGF-like 14" evidence="5">
    <location>
        <begin position="3781"/>
        <end position="3823"/>
    </location>
</feature>
<feature type="domain" description="EGF-like 15" evidence="5">
    <location>
        <begin position="3824"/>
        <end position="3861"/>
    </location>
</feature>
<feature type="repeat" description="LDL-receptor class B 31">
    <location>
        <begin position="3912"/>
        <end position="3954"/>
    </location>
</feature>
<feature type="repeat" description="LDL-receptor class B 32">
    <location>
        <begin position="3970"/>
        <end position="4012"/>
    </location>
</feature>
<feature type="repeat" description="LDL-receptor class B 33">
    <location>
        <begin position="4013"/>
        <end position="4056"/>
    </location>
</feature>
<feature type="repeat" description="LDL-receptor class B 34">
    <location>
        <begin position="4057"/>
        <end position="4101"/>
    </location>
</feature>
<feature type="domain" description="EGF-like 16" evidence="5">
    <location>
        <begin position="4147"/>
        <end position="4183"/>
    </location>
</feature>
<feature type="domain" description="EGF-like 17" evidence="5">
    <location>
        <begin position="4196"/>
        <end position="4232"/>
    </location>
</feature>
<feature type="domain" description="EGF-like 18" evidence="5">
    <location>
        <begin position="4232"/>
        <end position="4268"/>
    </location>
</feature>
<feature type="domain" description="EGF-like 19" evidence="5">
    <location>
        <begin position="4268"/>
        <end position="4304"/>
    </location>
</feature>
<feature type="domain" description="EGF-like 20" evidence="5">
    <location>
        <begin position="4304"/>
        <end position="4340"/>
    </location>
</feature>
<feature type="domain" description="EGF-like 21" evidence="5">
    <location>
        <begin position="4340"/>
        <end position="4375"/>
    </location>
</feature>
<feature type="domain" description="EGF-like 22" evidence="5">
    <location>
        <begin position="4373"/>
        <end position="4409"/>
    </location>
</feature>
<feature type="region of interest" description="Interaction with MAFB" evidence="3">
    <location>
        <begin position="4445"/>
        <end position="4544"/>
    </location>
</feature>
<feature type="short sequence motif" description="Recognition site for proteolytical processing" evidence="4">
    <location>
        <begin position="3940"/>
        <end position="3943"/>
    </location>
</feature>
<feature type="short sequence motif" description="NPXY motif">
    <location>
        <begin position="4502"/>
        <end position="4507"/>
    </location>
</feature>
<feature type="binding site" evidence="8">
    <location>
        <position position="871"/>
    </location>
    <ligand>
        <name>Ca(2+)</name>
        <dbReference type="ChEBI" id="CHEBI:29108"/>
        <label>1</label>
    </ligand>
</feature>
<feature type="binding site" evidence="8">
    <location>
        <position position="874"/>
    </location>
    <ligand>
        <name>Ca(2+)</name>
        <dbReference type="ChEBI" id="CHEBI:29108"/>
        <label>1</label>
    </ligand>
</feature>
<feature type="binding site" evidence="8">
    <location>
        <position position="876"/>
    </location>
    <ligand>
        <name>Ca(2+)</name>
        <dbReference type="ChEBI" id="CHEBI:29108"/>
        <label>1</label>
    </ligand>
</feature>
<feature type="binding site" evidence="8">
    <location>
        <position position="878"/>
    </location>
    <ligand>
        <name>Ca(2+)</name>
        <dbReference type="ChEBI" id="CHEBI:29108"/>
        <label>1</label>
    </ligand>
</feature>
<feature type="binding site" evidence="8">
    <location>
        <position position="884"/>
    </location>
    <ligand>
        <name>Ca(2+)</name>
        <dbReference type="ChEBI" id="CHEBI:29108"/>
        <label>1</label>
    </ligand>
</feature>
<feature type="binding site" evidence="8">
    <location>
        <position position="885"/>
    </location>
    <ligand>
        <name>Ca(2+)</name>
        <dbReference type="ChEBI" id="CHEBI:29108"/>
        <label>1</label>
    </ligand>
</feature>
<feature type="binding site" evidence="11">
    <location>
        <position position="1032"/>
    </location>
    <ligand>
        <name>Ca(2+)</name>
        <dbReference type="ChEBI" id="CHEBI:29108"/>
        <label>2</label>
    </ligand>
</feature>
<feature type="binding site" evidence="11">
    <location>
        <position position="1035"/>
    </location>
    <ligand>
        <name>Ca(2+)</name>
        <dbReference type="ChEBI" id="CHEBI:29108"/>
        <label>2</label>
    </ligand>
</feature>
<feature type="binding site" evidence="11">
    <location>
        <position position="1037"/>
    </location>
    <ligand>
        <name>Ca(2+)</name>
        <dbReference type="ChEBI" id="CHEBI:29108"/>
        <label>2</label>
    </ligand>
</feature>
<feature type="binding site" evidence="11">
    <location>
        <position position="1039"/>
    </location>
    <ligand>
        <name>Ca(2+)</name>
        <dbReference type="ChEBI" id="CHEBI:29108"/>
        <label>2</label>
    </ligand>
</feature>
<feature type="binding site" evidence="11">
    <location>
        <position position="1045"/>
    </location>
    <ligand>
        <name>Ca(2+)</name>
        <dbReference type="ChEBI" id="CHEBI:29108"/>
        <label>2</label>
    </ligand>
</feature>
<feature type="binding site" evidence="11">
    <location>
        <position position="1046"/>
    </location>
    <ligand>
        <name>Ca(2+)</name>
        <dbReference type="ChEBI" id="CHEBI:29108"/>
        <label>2</label>
    </ligand>
</feature>
<feature type="binding site" evidence="7">
    <location>
        <position position="1080"/>
    </location>
    <ligand>
        <name>Ca(2+)</name>
        <dbReference type="ChEBI" id="CHEBI:29108"/>
        <label>3</label>
    </ligand>
</feature>
<feature type="binding site" evidence="7">
    <location>
        <position position="1083"/>
    </location>
    <ligand>
        <name>Ca(2+)</name>
        <dbReference type="ChEBI" id="CHEBI:29108"/>
        <label>3</label>
    </ligand>
</feature>
<feature type="binding site" evidence="7">
    <location>
        <position position="1085"/>
    </location>
    <ligand>
        <name>Ca(2+)</name>
        <dbReference type="ChEBI" id="CHEBI:29108"/>
        <label>3</label>
    </ligand>
</feature>
<feature type="binding site" evidence="7">
    <location>
        <position position="1087"/>
    </location>
    <ligand>
        <name>Ca(2+)</name>
        <dbReference type="ChEBI" id="CHEBI:29108"/>
        <label>3</label>
    </ligand>
</feature>
<feature type="binding site" evidence="7">
    <location>
        <position position="1093"/>
    </location>
    <ligand>
        <name>Ca(2+)</name>
        <dbReference type="ChEBI" id="CHEBI:29108"/>
        <label>3</label>
    </ligand>
</feature>
<feature type="binding site" evidence="7">
    <location>
        <position position="1094"/>
    </location>
    <ligand>
        <name>Ca(2+)</name>
        <dbReference type="ChEBI" id="CHEBI:29108"/>
        <label>3</label>
    </ligand>
</feature>
<feature type="modified residue" description="N6-acetyllysine" evidence="3">
    <location>
        <position position="2009"/>
    </location>
</feature>
<feature type="modified residue" description="Phosphothreonine" evidence="42">
    <location>
        <position position="4460"/>
    </location>
</feature>
<feature type="modified residue" description="Phosphotyrosine" evidence="12">
    <location>
        <position position="4507"/>
    </location>
</feature>
<feature type="modified residue" description="Phosphoserine" evidence="42">
    <location>
        <position position="4517"/>
    </location>
</feature>
<feature type="modified residue" description="Phosphoserine" evidence="44">
    <location>
        <position position="4520"/>
    </location>
</feature>
<feature type="modified residue" description="Phosphoserine" evidence="42">
    <location>
        <position position="4523"/>
    </location>
</feature>
<feature type="glycosylation site" description="N-linked (GlcNAc...) asparagine" evidence="4">
    <location>
        <position position="114"/>
    </location>
</feature>
<feature type="glycosylation site" description="N-linked (GlcNAc...) asparagine" evidence="4">
    <location>
        <position position="136"/>
    </location>
</feature>
<feature type="glycosylation site" description="N-linked (GlcNAc...) asparagine" evidence="4">
    <location>
        <position position="185"/>
    </location>
</feature>
<feature type="glycosylation site" description="N-linked (GlcNAc...) asparagine" evidence="4">
    <location>
        <position position="239"/>
    </location>
</feature>
<feature type="glycosylation site" description="N-linked (GlcNAc...) asparagine" evidence="4">
    <location>
        <position position="274"/>
    </location>
</feature>
<feature type="glycosylation site" description="N-linked (GlcNAc...) asparagine" evidence="4">
    <location>
        <position position="357"/>
    </location>
</feature>
<feature type="glycosylation site" description="N-linked (GlcNAc...) asparagine" evidence="22 28">
    <location>
        <position position="446"/>
    </location>
</feature>
<feature type="glycosylation site" description="N-linked (GlcNAc...) (complex) asparagine" evidence="22 27 28">
    <location>
        <position position="729"/>
    </location>
</feature>
<feature type="glycosylation site" description="N-linked (GlcNAc...) asparagine" evidence="4">
    <location>
        <position position="928"/>
    </location>
</feature>
<feature type="glycosylation site" description="N-linked (GlcNAc...) asparagine" evidence="4">
    <location>
        <position position="1050"/>
    </location>
</feature>
<feature type="glycosylation site" description="N-linked (GlcNAc...) asparagine" evidence="4">
    <location>
        <position position="1154"/>
    </location>
</feature>
<feature type="glycosylation site" description="N-linked (GlcNAc...) asparagine" evidence="4">
    <location>
        <position position="1155"/>
    </location>
</feature>
<feature type="glycosylation site" description="N-linked (GlcNAc...) asparagine" evidence="4">
    <location>
        <position position="1195"/>
    </location>
</feature>
<feature type="glycosylation site" description="N-linked (GlcNAc...) asparagine" evidence="4">
    <location>
        <position position="1218"/>
    </location>
</feature>
<feature type="glycosylation site" description="N-linked (GlcNAc...) (complex) asparagine" evidence="27 28">
    <location>
        <position position="1511"/>
    </location>
</feature>
<feature type="glycosylation site" description="N-linked (GlcNAc...) asparagine" evidence="4">
    <location>
        <position position="1558"/>
    </location>
</feature>
<feature type="glycosylation site" description="N-linked (GlcNAc...) asparagine" evidence="28">
    <location>
        <position position="1575"/>
    </location>
</feature>
<feature type="glycosylation site" description="N-linked (GlcNAc...) asparagine" evidence="28">
    <location>
        <position position="1616"/>
    </location>
</feature>
<feature type="glycosylation site" description="N-linked (GlcNAc...) asparagine" evidence="28">
    <location>
        <position position="1645"/>
    </location>
</feature>
<feature type="glycosylation site" description="N-linked (GlcNAc...) asparagine" evidence="4">
    <location>
        <position position="1723"/>
    </location>
</feature>
<feature type="glycosylation site" description="N-linked (GlcNAc...) asparagine" evidence="4">
    <location>
        <position position="1733"/>
    </location>
</feature>
<feature type="glycosylation site" description="N-linked (GlcNAc...) asparagine" evidence="28">
    <location>
        <position position="1763"/>
    </location>
</feature>
<feature type="glycosylation site" description="N-linked (GlcNAc...) asparagine" evidence="4">
    <location>
        <position position="1825"/>
    </location>
</feature>
<feature type="glycosylation site" description="N-linked (GlcNAc...) asparagine" evidence="4">
    <location>
        <position position="1933"/>
    </location>
</feature>
<feature type="glycosylation site" description="N-linked (GlcNAc...) asparagine" evidence="4">
    <location>
        <position position="1995"/>
    </location>
</feature>
<feature type="glycosylation site" description="N-linked (GlcNAc...) asparagine" evidence="4">
    <location>
        <position position="2048"/>
    </location>
</feature>
<feature type="glycosylation site" description="N-linked (GlcNAc...) asparagine" evidence="4">
    <location>
        <position position="2117"/>
    </location>
</feature>
<feature type="glycosylation site" description="N-linked (GlcNAc...) asparagine" evidence="22 28">
    <location>
        <position position="2127"/>
    </location>
</feature>
<feature type="glycosylation site" description="N-linked (GlcNAc...) asparagine" evidence="4">
    <location>
        <position position="2472"/>
    </location>
</feature>
<feature type="glycosylation site" description="N-linked (GlcNAc...) asparagine" evidence="4">
    <location>
        <position position="2502"/>
    </location>
</feature>
<feature type="glycosylation site" description="N-linked (GlcNAc...) asparagine" evidence="4">
    <location>
        <position position="2521"/>
    </location>
</feature>
<feature type="glycosylation site" description="N-linked (GlcNAc...) asparagine" evidence="4">
    <location>
        <position position="2539"/>
    </location>
</feature>
<feature type="glycosylation site" description="N-linked (GlcNAc...) asparagine" evidence="4">
    <location>
        <position position="2601"/>
    </location>
</feature>
<feature type="glycosylation site" description="N-linked (GlcNAc...) asparagine" evidence="4">
    <location>
        <position position="2620"/>
    </location>
</feature>
<feature type="glycosylation site" description="N-linked (GlcNAc...) asparagine" evidence="4">
    <location>
        <position position="2638"/>
    </location>
</feature>
<feature type="glycosylation site" description="N-linked (GlcNAc...) asparagine" evidence="28">
    <location>
        <position position="2815"/>
    </location>
</feature>
<feature type="glycosylation site" description="N-linked (GlcNAc...) asparagine" evidence="4">
    <location>
        <position position="2905"/>
    </location>
</feature>
<feature type="glycosylation site" description="N-linked (GlcNAc...) asparagine" evidence="22 28">
    <location>
        <position position="3048"/>
    </location>
</feature>
<feature type="glycosylation site" description="N-linked (GlcNAc...) asparagine" evidence="28">
    <location>
        <position position="3089"/>
    </location>
</feature>
<feature type="glycosylation site" description="N-linked (GlcNAc...) asparagine" evidence="4">
    <location>
        <position position="3264"/>
    </location>
</feature>
<feature type="glycosylation site" description="N-linked (GlcNAc...) asparagine" evidence="4">
    <location>
        <position position="3333"/>
    </location>
</feature>
<feature type="glycosylation site" description="N-linked (GlcNAc...) asparagine" evidence="28">
    <location>
        <position position="3488"/>
    </location>
</feature>
<feature type="glycosylation site" description="N-linked (GlcNAc...) asparagine" evidence="4">
    <location>
        <position position="3662"/>
    </location>
</feature>
<feature type="glycosylation site" description="N-linked (GlcNAc...) asparagine" evidence="28">
    <location>
        <position position="3788"/>
    </location>
</feature>
<feature type="glycosylation site" description="N-linked (GlcNAc...) asparagine" evidence="4">
    <location>
        <position position="3839"/>
    </location>
</feature>
<feature type="glycosylation site" description="N-linked (GlcNAc...) asparagine" evidence="28">
    <location>
        <position position="3953"/>
    </location>
</feature>
<feature type="glycosylation site" description="N-linked (GlcNAc...) asparagine" evidence="28">
    <location>
        <position position="4075"/>
    </location>
</feature>
<feature type="glycosylation site" description="N-linked (GlcNAc...) asparagine" evidence="28">
    <location>
        <position position="4125"/>
    </location>
</feature>
<feature type="glycosylation site" description="N-linked (GlcNAc...) asparagine" evidence="4">
    <location>
        <position position="4179"/>
    </location>
</feature>
<feature type="glycosylation site" description="N-linked (GlcNAc...) asparagine" evidence="4">
    <location>
        <position position="4278"/>
    </location>
</feature>
<feature type="glycosylation site" description="N-linked (GlcNAc...) asparagine" evidence="4">
    <location>
        <position position="4279"/>
    </location>
</feature>
<feature type="glycosylation site" description="N-linked (GlcNAc...) asparagine" evidence="4">
    <location>
        <position position="4364"/>
    </location>
</feature>
<feature type="disulfide bond" evidence="1">
    <location>
        <begin position="27"/>
        <end position="40"/>
    </location>
</feature>
<feature type="disulfide bond" evidence="1">
    <location>
        <begin position="34"/>
        <end position="53"/>
    </location>
</feature>
<feature type="disulfide bond" evidence="1">
    <location>
        <begin position="47"/>
        <end position="64"/>
    </location>
</feature>
<feature type="disulfide bond" evidence="1">
    <location>
        <begin position="72"/>
        <end position="85"/>
    </location>
</feature>
<feature type="disulfide bond" evidence="1">
    <location>
        <begin position="79"/>
        <end position="98"/>
    </location>
</feature>
<feature type="disulfide bond" evidence="1">
    <location>
        <begin position="92"/>
        <end position="108"/>
    </location>
</feature>
<feature type="disulfide bond" evidence="1">
    <location>
        <begin position="115"/>
        <end position="124"/>
    </location>
</feature>
<feature type="disulfide bond" evidence="1">
    <location>
        <begin position="120"/>
        <end position="133"/>
    </location>
</feature>
<feature type="disulfide bond" evidence="1">
    <location>
        <begin position="135"/>
        <end position="148"/>
    </location>
</feature>
<feature type="disulfide bond" evidence="1">
    <location>
        <begin position="154"/>
        <end position="164"/>
    </location>
</feature>
<feature type="disulfide bond" evidence="1">
    <location>
        <begin position="160"/>
        <end position="173"/>
    </location>
</feature>
<feature type="disulfide bond" evidence="1">
    <location>
        <begin position="175"/>
        <end position="188"/>
    </location>
</feature>
<feature type="disulfide bond" evidence="1">
    <location>
        <begin position="478"/>
        <end position="493"/>
    </location>
</feature>
<feature type="disulfide bond" evidence="1">
    <location>
        <begin position="489"/>
        <end position="504"/>
    </location>
</feature>
<feature type="disulfide bond" evidence="1">
    <location>
        <begin position="506"/>
        <end position="519"/>
    </location>
</feature>
<feature type="disulfide bond" evidence="1">
    <location>
        <begin position="807"/>
        <end position="818"/>
    </location>
</feature>
<feature type="disulfide bond" evidence="1">
    <location>
        <begin position="814"/>
        <end position="827"/>
    </location>
</feature>
<feature type="disulfide bond" evidence="1">
    <location>
        <begin position="829"/>
        <end position="842"/>
    </location>
</feature>
<feature type="disulfide bond">
    <location>
        <begin position="854"/>
        <end position="866"/>
    </location>
</feature>
<feature type="disulfide bond">
    <location>
        <begin position="861"/>
        <end position="879"/>
    </location>
</feature>
<feature type="disulfide bond">
    <location>
        <begin position="873"/>
        <end position="890"/>
    </location>
</feature>
<feature type="disulfide bond" evidence="1">
    <location>
        <begin position="895"/>
        <end position="907"/>
    </location>
</feature>
<feature type="disulfide bond" evidence="1">
    <location>
        <begin position="902"/>
        <end position="920"/>
    </location>
</feature>
<feature type="disulfide bond" evidence="1">
    <location>
        <begin position="914"/>
        <end position="931"/>
    </location>
</feature>
<feature type="disulfide bond">
    <location>
        <begin position="936"/>
        <end position="948"/>
    </location>
</feature>
<feature type="disulfide bond">
    <location>
        <begin position="943"/>
        <end position="961"/>
    </location>
</feature>
<feature type="disulfide bond">
    <location>
        <begin position="955"/>
        <end position="971"/>
    </location>
</feature>
<feature type="disulfide bond">
    <location>
        <begin position="976"/>
        <end position="989"/>
    </location>
</feature>
<feature type="disulfide bond">
    <location>
        <begin position="984"/>
        <end position="1002"/>
    </location>
</feature>
<feature type="disulfide bond">
    <location>
        <begin position="996"/>
        <end position="1011"/>
    </location>
</feature>
<feature type="disulfide bond">
    <location>
        <begin position="1015"/>
        <end position="1027"/>
    </location>
</feature>
<feature type="disulfide bond">
    <location>
        <begin position="1022"/>
        <end position="1040"/>
    </location>
</feature>
<feature type="disulfide bond">
    <location>
        <begin position="1034"/>
        <end position="1051"/>
    </location>
</feature>
<feature type="disulfide bond">
    <location>
        <begin position="1062"/>
        <end position="1075"/>
    </location>
</feature>
<feature type="disulfide bond">
    <location>
        <begin position="1069"/>
        <end position="1088"/>
    </location>
</feature>
<feature type="disulfide bond">
    <location>
        <begin position="1082"/>
        <end position="1097"/>
    </location>
</feature>
<feature type="disulfide bond" evidence="1">
    <location>
        <begin position="1104"/>
        <end position="1118"/>
    </location>
</feature>
<feature type="disulfide bond" evidence="1">
    <location>
        <begin position="1112"/>
        <end position="1131"/>
    </location>
</feature>
<feature type="disulfide bond" evidence="1">
    <location>
        <begin position="1125"/>
        <end position="1140"/>
    </location>
</feature>
<feature type="disulfide bond" evidence="1">
    <location>
        <begin position="1145"/>
        <end position="1159"/>
    </location>
</feature>
<feature type="disulfide bond" evidence="1">
    <location>
        <begin position="1152"/>
        <end position="1172"/>
    </location>
</feature>
<feature type="disulfide bond" evidence="1">
    <location>
        <begin position="1166"/>
        <end position="1182"/>
    </location>
</feature>
<feature type="disulfide bond" evidence="1">
    <location>
        <begin position="1185"/>
        <end position="1196"/>
    </location>
</feature>
<feature type="disulfide bond" evidence="1">
    <location>
        <begin position="1192"/>
        <end position="1206"/>
    </location>
</feature>
<feature type="disulfide bond" evidence="1">
    <location>
        <begin position="1208"/>
        <end position="1221"/>
    </location>
</feature>
<feature type="disulfide bond" evidence="1">
    <location>
        <begin position="1227"/>
        <end position="1237"/>
    </location>
</feature>
<feature type="disulfide bond" evidence="1">
    <location>
        <begin position="1233"/>
        <end position="1246"/>
    </location>
</feature>
<feature type="disulfide bond" evidence="1">
    <location>
        <begin position="1248"/>
        <end position="1261"/>
    </location>
</feature>
<feature type="disulfide bond" evidence="1">
    <location>
        <begin position="1540"/>
        <end position="1553"/>
    </location>
</feature>
<feature type="disulfide bond" evidence="1">
    <location>
        <begin position="1549"/>
        <end position="1563"/>
    </location>
</feature>
<feature type="disulfide bond" evidence="1">
    <location>
        <begin position="1565"/>
        <end position="1578"/>
    </location>
</feature>
<feature type="disulfide bond" evidence="1">
    <location>
        <begin position="1850"/>
        <end position="1861"/>
    </location>
</feature>
<feature type="disulfide bond" evidence="1">
    <location>
        <begin position="1857"/>
        <end position="1871"/>
    </location>
</feature>
<feature type="disulfide bond" evidence="1">
    <location>
        <begin position="1873"/>
        <end position="1886"/>
    </location>
</feature>
<feature type="disulfide bond" evidence="1">
    <location>
        <begin position="2159"/>
        <end position="2170"/>
    </location>
</feature>
<feature type="disulfide bond" evidence="1">
    <location>
        <begin position="2166"/>
        <end position="2180"/>
    </location>
</feature>
<feature type="disulfide bond" evidence="1">
    <location>
        <begin position="2182"/>
        <end position="2194"/>
    </location>
</feature>
<feature type="disulfide bond" evidence="1">
    <location>
        <begin position="2482"/>
        <end position="2493"/>
    </location>
</feature>
<feature type="disulfide bond" evidence="1">
    <location>
        <begin position="2489"/>
        <end position="2503"/>
    </location>
</feature>
<feature type="disulfide bond" evidence="1">
    <location>
        <begin position="2505"/>
        <end position="2517"/>
    </location>
</feature>
<feature type="disulfide bond" evidence="1">
    <location>
        <begin position="2524"/>
        <end position="2537"/>
    </location>
</feature>
<feature type="disulfide bond" evidence="1">
    <location>
        <begin position="2532"/>
        <end position="2550"/>
    </location>
</feature>
<feature type="disulfide bond" evidence="1">
    <location>
        <begin position="2544"/>
        <end position="2561"/>
    </location>
</feature>
<feature type="disulfide bond" evidence="1">
    <location>
        <begin position="2566"/>
        <end position="2578"/>
    </location>
</feature>
<feature type="disulfide bond" evidence="1">
    <location>
        <begin position="2573"/>
        <end position="2591"/>
    </location>
</feature>
<feature type="disulfide bond" evidence="1">
    <location>
        <begin position="2585"/>
        <end position="2600"/>
    </location>
</feature>
<feature type="disulfide bond" evidence="1">
    <location>
        <begin position="2605"/>
        <end position="2617"/>
    </location>
</feature>
<feature type="disulfide bond" evidence="1">
    <location>
        <begin position="2612"/>
        <end position="2630"/>
    </location>
</feature>
<feature type="disulfide bond" evidence="1">
    <location>
        <begin position="2624"/>
        <end position="2639"/>
    </location>
</feature>
<feature type="disulfide bond" evidence="1">
    <location>
        <begin position="2644"/>
        <end position="2666"/>
    </location>
</feature>
<feature type="disulfide bond" evidence="1">
    <location>
        <begin position="2660"/>
        <end position="2679"/>
    </location>
</feature>
<feature type="disulfide bond" evidence="1">
    <location>
        <begin position="2673"/>
        <end position="2688"/>
    </location>
</feature>
<feature type="disulfide bond" evidence="1">
    <location>
        <begin position="2696"/>
        <end position="2708"/>
    </location>
</feature>
<feature type="disulfide bond" evidence="1">
    <location>
        <begin position="2703"/>
        <end position="2721"/>
    </location>
</feature>
<feature type="disulfide bond" evidence="1">
    <location>
        <begin position="2715"/>
        <end position="2730"/>
    </location>
</feature>
<feature type="disulfide bond" evidence="1">
    <location>
        <begin position="2734"/>
        <end position="2746"/>
    </location>
</feature>
<feature type="disulfide bond" evidence="1">
    <location>
        <begin position="2741"/>
        <end position="2759"/>
    </location>
</feature>
<feature type="disulfide bond" evidence="1">
    <location>
        <begin position="2753"/>
        <end position="2769"/>
    </location>
</feature>
<feature type="disulfide bond" evidence="1">
    <location>
        <begin position="2774"/>
        <end position="2787"/>
    </location>
</feature>
<feature type="disulfide bond" evidence="1">
    <location>
        <begin position="2781"/>
        <end position="2800"/>
    </location>
</feature>
<feature type="disulfide bond" evidence="1">
    <location>
        <begin position="2794"/>
        <end position="2812"/>
    </location>
</feature>
<feature type="disulfide bond" evidence="1">
    <location>
        <begin position="2818"/>
        <end position="2830"/>
    </location>
</feature>
<feature type="disulfide bond" evidence="1">
    <location>
        <begin position="2825"/>
        <end position="2843"/>
    </location>
</feature>
<feature type="disulfide bond" evidence="1">
    <location>
        <begin position="2837"/>
        <end position="2853"/>
    </location>
</feature>
<feature type="disulfide bond" evidence="1">
    <location>
        <begin position="2858"/>
        <end position="2870"/>
    </location>
</feature>
<feature type="disulfide bond" evidence="1">
    <location>
        <begin position="2865"/>
        <end position="2884"/>
    </location>
</feature>
<feature type="disulfide bond" evidence="1">
    <location>
        <begin position="2878"/>
        <end position="2897"/>
    </location>
</feature>
<feature type="disulfide bond" evidence="1">
    <location>
        <begin position="2904"/>
        <end position="2917"/>
    </location>
</feature>
<feature type="disulfide bond" evidence="1">
    <location>
        <begin position="2912"/>
        <end position="2930"/>
    </location>
</feature>
<feature type="disulfide bond" evidence="1">
    <location>
        <begin position="2924"/>
        <end position="2939"/>
    </location>
</feature>
<feature type="disulfide bond" evidence="1">
    <location>
        <begin position="2944"/>
        <end position="2956"/>
    </location>
</feature>
<feature type="disulfide bond" evidence="1">
    <location>
        <begin position="2952"/>
        <end position="2965"/>
    </location>
</feature>
<feature type="disulfide bond" evidence="1">
    <location>
        <begin position="2967"/>
        <end position="2980"/>
    </location>
</feature>
<feature type="disulfide bond" evidence="1">
    <location>
        <begin position="2986"/>
        <end position="2996"/>
    </location>
</feature>
<feature type="disulfide bond" evidence="1">
    <location>
        <begin position="2992"/>
        <end position="3005"/>
    </location>
</feature>
<feature type="disulfide bond" evidence="1">
    <location>
        <begin position="3007"/>
        <end position="3021"/>
    </location>
</feature>
<feature type="disulfide bond" evidence="1">
    <location>
        <begin position="3294"/>
        <end position="3305"/>
    </location>
</feature>
<feature type="disulfide bond" evidence="1">
    <location>
        <begin position="3301"/>
        <end position="3315"/>
    </location>
</feature>
<feature type="disulfide bond" evidence="1">
    <location>
        <begin position="3317"/>
        <end position="3330"/>
    </location>
</feature>
<feature type="disulfide bond" evidence="1">
    <location>
        <begin position="3334"/>
        <end position="3346"/>
    </location>
</feature>
<feature type="disulfide bond" evidence="1">
    <location>
        <begin position="3341"/>
        <end position="3359"/>
    </location>
</feature>
<feature type="disulfide bond" evidence="1">
    <location>
        <begin position="3353"/>
        <end position="3369"/>
    </location>
</feature>
<feature type="disulfide bond" evidence="1">
    <location>
        <begin position="3374"/>
        <end position="3386"/>
    </location>
</feature>
<feature type="disulfide bond" evidence="1">
    <location>
        <begin position="3381"/>
        <end position="3399"/>
    </location>
</feature>
<feature type="disulfide bond" evidence="1">
    <location>
        <begin position="3393"/>
        <end position="3408"/>
    </location>
</feature>
<feature type="disulfide bond" evidence="1">
    <location>
        <begin position="3413"/>
        <end position="3426"/>
    </location>
</feature>
<feature type="disulfide bond" evidence="1">
    <location>
        <begin position="3420"/>
        <end position="3439"/>
    </location>
</feature>
<feature type="disulfide bond" evidence="1">
    <location>
        <begin position="3433"/>
        <end position="3448"/>
    </location>
</feature>
<feature type="disulfide bond" evidence="1">
    <location>
        <begin position="3453"/>
        <end position="3466"/>
    </location>
</feature>
<feature type="disulfide bond" evidence="1">
    <location>
        <begin position="3460"/>
        <end position="3479"/>
    </location>
</feature>
<feature type="disulfide bond" evidence="1">
    <location>
        <begin position="3473"/>
        <end position="3489"/>
    </location>
</feature>
<feature type="disulfide bond" evidence="1">
    <location>
        <begin position="3494"/>
        <end position="3507"/>
    </location>
</feature>
<feature type="disulfide bond" evidence="1">
    <location>
        <begin position="3501"/>
        <end position="3520"/>
    </location>
</feature>
<feature type="disulfide bond" evidence="1">
    <location>
        <begin position="3514"/>
        <end position="3531"/>
    </location>
</feature>
<feature type="disulfide bond" evidence="1">
    <location>
        <begin position="3536"/>
        <end position="3548"/>
    </location>
</feature>
<feature type="disulfide bond" evidence="1">
    <location>
        <begin position="3543"/>
        <end position="3561"/>
    </location>
</feature>
<feature type="disulfide bond" evidence="1">
    <location>
        <begin position="3555"/>
        <end position="3570"/>
    </location>
</feature>
<feature type="disulfide bond" evidence="1">
    <location>
        <begin position="3575"/>
        <end position="3587"/>
    </location>
</feature>
<feature type="disulfide bond" evidence="1">
    <location>
        <begin position="3582"/>
        <end position="3600"/>
    </location>
</feature>
<feature type="disulfide bond" evidence="1">
    <location>
        <begin position="3594"/>
        <end position="3609"/>
    </location>
</feature>
<feature type="disulfide bond" evidence="1">
    <location>
        <begin position="3613"/>
        <end position="3625"/>
    </location>
</feature>
<feature type="disulfide bond" evidence="1">
    <location>
        <begin position="3620"/>
        <end position="3638"/>
    </location>
</feature>
<feature type="disulfide bond" evidence="1">
    <location>
        <begin position="3632"/>
        <end position="3647"/>
    </location>
</feature>
<feature type="disulfide bond" evidence="1">
    <location>
        <begin position="3654"/>
        <end position="3666"/>
    </location>
</feature>
<feature type="disulfide bond" evidence="1">
    <location>
        <begin position="3661"/>
        <end position="3679"/>
    </location>
</feature>
<feature type="disulfide bond" evidence="1">
    <location>
        <begin position="3673"/>
        <end position="3690"/>
    </location>
</feature>
<feature type="disulfide bond" evidence="1">
    <location>
        <begin position="3695"/>
        <end position="3709"/>
    </location>
</feature>
<feature type="disulfide bond" evidence="1">
    <location>
        <begin position="3703"/>
        <end position="3722"/>
    </location>
</feature>
<feature type="disulfide bond" evidence="1">
    <location>
        <begin position="3716"/>
        <end position="3731"/>
    </location>
</feature>
<feature type="disulfide bond" evidence="1">
    <location>
        <begin position="3741"/>
        <end position="3754"/>
    </location>
</feature>
<feature type="disulfide bond" evidence="1">
    <location>
        <begin position="3749"/>
        <end position="3767"/>
    </location>
</feature>
<feature type="disulfide bond" evidence="1">
    <location>
        <begin position="3761"/>
        <end position="3776"/>
    </location>
</feature>
<feature type="disulfide bond" evidence="1">
    <location>
        <begin position="3785"/>
        <end position="3798"/>
    </location>
</feature>
<feature type="disulfide bond" evidence="1">
    <location>
        <begin position="3792"/>
        <end position="3807"/>
    </location>
</feature>
<feature type="disulfide bond" evidence="1">
    <location>
        <begin position="3809"/>
        <end position="3822"/>
    </location>
</feature>
<feature type="disulfide bond" evidence="1">
    <location>
        <begin position="3828"/>
        <end position="3838"/>
    </location>
</feature>
<feature type="disulfide bond" evidence="1">
    <location>
        <begin position="3834"/>
        <end position="3847"/>
    </location>
</feature>
<feature type="disulfide bond" evidence="1">
    <location>
        <begin position="3849"/>
        <end position="3860"/>
    </location>
</feature>
<feature type="disulfide bond" evidence="1">
    <location>
        <begin position="4151"/>
        <end position="4160"/>
    </location>
</feature>
<feature type="disulfide bond" evidence="1">
    <location>
        <begin position="4156"/>
        <end position="4169"/>
    </location>
</feature>
<feature type="disulfide bond" evidence="1">
    <location>
        <begin position="4171"/>
        <end position="4182"/>
    </location>
</feature>
<feature type="disulfide bond" evidence="1">
    <location>
        <begin position="4200"/>
        <end position="4210"/>
    </location>
</feature>
<feature type="disulfide bond" evidence="1">
    <location>
        <begin position="4204"/>
        <end position="4220"/>
    </location>
</feature>
<feature type="disulfide bond" evidence="1">
    <location>
        <begin position="4222"/>
        <end position="4231"/>
    </location>
</feature>
<feature type="disulfide bond" evidence="1">
    <location>
        <begin position="4236"/>
        <end position="4246"/>
    </location>
</feature>
<feature type="disulfide bond" evidence="1">
    <location>
        <begin position="4240"/>
        <end position="4256"/>
    </location>
</feature>
<feature type="disulfide bond" evidence="1">
    <location>
        <begin position="4258"/>
        <end position="4267"/>
    </location>
</feature>
<feature type="disulfide bond" evidence="1">
    <location>
        <begin position="4272"/>
        <end position="4282"/>
    </location>
</feature>
<feature type="disulfide bond" evidence="1">
    <location>
        <begin position="4276"/>
        <end position="4292"/>
    </location>
</feature>
<feature type="disulfide bond" evidence="1">
    <location>
        <begin position="4294"/>
        <end position="4303"/>
    </location>
</feature>
<feature type="disulfide bond" evidence="1">
    <location>
        <begin position="4308"/>
        <end position="4318"/>
    </location>
</feature>
<feature type="disulfide bond" evidence="1">
    <location>
        <begin position="4312"/>
        <end position="4328"/>
    </location>
</feature>
<feature type="disulfide bond" evidence="1">
    <location>
        <begin position="4330"/>
        <end position="4339"/>
    </location>
</feature>
<feature type="disulfide bond" evidence="1">
    <location>
        <begin position="4344"/>
        <end position="4352"/>
    </location>
</feature>
<feature type="disulfide bond" evidence="1">
    <location>
        <begin position="4347"/>
        <end position="4363"/>
    </location>
</feature>
<feature type="disulfide bond" evidence="1">
    <location>
        <begin position="4365"/>
        <end position="4374"/>
    </location>
</feature>
<feature type="disulfide bond" evidence="1">
    <location>
        <begin position="4377"/>
        <end position="4387"/>
    </location>
</feature>
<feature type="disulfide bond" evidence="1">
    <location>
        <begin position="4381"/>
        <end position="4397"/>
    </location>
</feature>
<feature type="disulfide bond" evidence="1">
    <location>
        <begin position="4399"/>
        <end position="4408"/>
    </location>
</feature>
<feature type="splice variant" id="VSP_056919" description="In isoform 2." evidence="39">
    <original>HVEQMAIDWLTG</original>
    <variation>LCVFSKSQQEMG</variation>
    <location>
        <begin position="281"/>
        <end position="292"/>
    </location>
</feature>
<feature type="splice variant" id="VSP_056920" description="In isoform 2." evidence="39">
    <location>
        <begin position="293"/>
        <end position="4544"/>
    </location>
</feature>
<feature type="sequence variant" id="VAR_021885" description="In dbSNP:rs2306691.">
    <original>N</original>
    <variation>D</variation>
    <location>
        <position position="166"/>
    </location>
</feature>
<feature type="sequence variant" id="VAR_014725" description="In dbSNP:rs1800127.">
    <original>A</original>
    <variation>V</variation>
    <location>
        <position position="217"/>
    </location>
</feature>
<feature type="sequence variant" id="VAR_089253" description="In DDH3; uncertain significance." evidence="35">
    <original>P</original>
    <variation>A</variation>
    <location>
        <position position="224"/>
    </location>
</feature>
<feature type="sequence variant" id="VAR_089254" description="In DDH3; uncertain significance; dbSNP:rs761900805." evidence="35">
    <original>T</original>
    <variation>M</variation>
    <location>
        <position position="725"/>
    </location>
</feature>
<feature type="sequence variant" id="VAR_035994" description="In a colorectal cancer sample; somatic mutation; dbSNP:rs1207947902." evidence="24">
    <original>E</original>
    <variation>K</variation>
    <location>
        <position position="869"/>
    </location>
</feature>
<feature type="sequence variant" id="VAR_077982" description="In KPA; reduced alpha-2 macroglobulin receptor activity; reduced protein abundance; dbSNP:rs483353013." evidence="31">
    <original>K</original>
    <variation>R</variation>
    <location>
        <position position="1245"/>
    </location>
</feature>
<feature type="sequence variant" id="VAR_089255" description="In DDH3; likely pathogenic; decreased protein expression levels and reduction of the acetabular volumes, leading to defective coverage of the femoral heads, when tested in heterozygous and homozygous knockin mice; dbSNP:rs762970763." evidence="35">
    <original>R</original>
    <variation>W</variation>
    <location>
        <position position="1783"/>
    </location>
</feature>
<feature type="sequence variant" id="VAR_029181" description="In dbSNP:rs2229278.">
    <original>V</original>
    <variation>L</variation>
    <location>
        <position position="2059"/>
    </location>
</feature>
<feature type="sequence variant" id="VAR_047525" description="In dbSNP:rs34577247.">
    <original>D</original>
    <variation>N</variation>
    <location>
        <position position="2080"/>
    </location>
</feature>
<feature type="sequence variant" id="VAR_089256" description="In DDH3; uncertain significance; dbSNP:rs767319988." evidence="35">
    <original>T</original>
    <variation>K</variation>
    <location>
        <position position="2129"/>
    </location>
</feature>
<feature type="sequence variant" id="VAR_089257" description="In DDH3; uncertain significance; dbSNP:rs773493186." evidence="35">
    <original>N</original>
    <variation>S</variation>
    <location>
        <position position="2867"/>
    </location>
</feature>
<feature type="sequence variant" id="VAR_047526" description="In dbSNP:rs7397167." evidence="33 37 38">
    <original>Q</original>
    <variation>P</variation>
    <location>
        <position position="2900"/>
    </location>
</feature>
<feature type="sequence variant" id="VAR_069388" description="Found in a patient with severe intellectual disability, seizures, stereotypic behavior, high pain threshold and sleep disturbances; dbSNP:rs1565750061." evidence="30">
    <original>H</original>
    <variation>Q</variation>
    <location>
        <position position="3258"/>
    </location>
</feature>
<feature type="sequence variant" id="VAR_035995" description="In a colorectal cancer sample; somatic mutation; dbSNP:rs569866427." evidence="24">
    <original>R</original>
    <variation>H</variation>
    <location>
        <position position="3760"/>
    </location>
</feature>
<feature type="sequence variant" id="VAR_089258" description="In DDH3; uncertain significance." evidence="35">
    <original>H</original>
    <variation>R</variation>
    <location>
        <position position="3814"/>
    </location>
</feature>
<feature type="sequence variant" id="VAR_089259" description="In DDH3; uncertain significance; dbSNP:rs762485864." evidence="35">
    <original>P</original>
    <variation>Q</variation>
    <location>
        <position position="4192"/>
    </location>
</feature>
<feature type="sequence variant" id="VAR_047527" description="In dbSNP:rs17357542.">
    <original>E</original>
    <variation>G</variation>
    <location>
        <position position="4536"/>
    </location>
</feature>
<feature type="mutagenesis site" description="Strongly reduced phosphorylation and loss of interaction with SHC1; when associated with A-4517; A-4520 and A-4523." evidence="19">
    <original>T</original>
    <variation>A</variation>
    <location>
        <position position="4460"/>
    </location>
</feature>
<feature type="mutagenesis site" description="No effect on tyrosine phosphorylation." evidence="12">
    <original>NPTY</original>
    <variation>APTA</variation>
    <location>
        <begin position="4470"/>
        <end position="4473"/>
    </location>
</feature>
<feature type="mutagenesis site" description="No effect on interaction with GULP1." evidence="10">
    <original>N</original>
    <variation>A</variation>
    <location>
        <position position="4470"/>
    </location>
</feature>
<feature type="mutagenesis site" description="No detectable effect on phosphorylation." evidence="19">
    <original>T</original>
    <variation>A</variation>
    <location>
        <position position="4472"/>
    </location>
</feature>
<feature type="mutagenesis site" description="Loss of tyrosine phosphorylation. Abolishes interaction with SHC1 and GULP1." evidence="12">
    <original>NPVY</original>
    <variation>APVA</variation>
    <location>
        <begin position="4504"/>
        <end position="4507"/>
    </location>
</feature>
<feature type="mutagenesis site" description="Loss of interaction with GULP1." evidence="10">
    <original>N</original>
    <variation>A</variation>
    <location>
        <position position="4504"/>
    </location>
</feature>
<feature type="mutagenesis site" description="Strongly reduced phosphorylation and loss of interaction with SHC1; when associated with A-4460; A-4520 and A-4523." evidence="19">
    <original>S</original>
    <variation>A</variation>
    <location>
        <position position="4517"/>
    </location>
</feature>
<feature type="mutagenesis site" description="Strongly reduced phosphorylation and loss of interaction with SHC1; when associated with A-4460; A-4517 and A-4523." evidence="19">
    <original>S</original>
    <variation>A</variation>
    <location>
        <position position="4520"/>
    </location>
</feature>
<feature type="mutagenesis site" description="Strongly reduced phosphorylation and loss of interaction with SHC1; when associated with A-4460; A-4517 and A-4520." evidence="19">
    <original>S</original>
    <variation>A</variation>
    <location>
        <position position="4523"/>
    </location>
</feature>
<feature type="sequence conflict" description="In Ref. 9; AA sequence." evidence="41" ref="9">
    <original>D</original>
    <variation>G</variation>
    <location>
        <position position="685"/>
    </location>
</feature>
<feature type="sequence conflict" description="In Ref. 9; AA sequence." evidence="41" ref="9">
    <original>G</original>
    <variation>S</variation>
    <location>
        <position position="1743"/>
    </location>
</feature>
<feature type="sequence conflict" description="In Ref. 9; AA sequence." evidence="41" ref="9">
    <original>LS</original>
    <variation>IA</variation>
    <location>
        <begin position="2871"/>
        <end position="2872"/>
    </location>
</feature>
<feature type="sequence conflict" description="In Ref. 9; AA sequence." evidence="41" ref="9">
    <original>R</original>
    <variation>M</variation>
    <location>
        <position position="3036"/>
    </location>
</feature>
<feature type="turn" evidence="46">
    <location>
        <begin position="853"/>
        <end position="857"/>
    </location>
</feature>
<feature type="strand" evidence="46">
    <location>
        <begin position="859"/>
        <end position="861"/>
    </location>
</feature>
<feature type="turn" evidence="46">
    <location>
        <begin position="862"/>
        <end position="864"/>
    </location>
</feature>
<feature type="strand" evidence="46">
    <location>
        <begin position="865"/>
        <end position="867"/>
    </location>
</feature>
<feature type="helix" evidence="46">
    <location>
        <begin position="869"/>
        <end position="871"/>
    </location>
</feature>
<feature type="strand" evidence="46">
    <location>
        <begin position="874"/>
        <end position="876"/>
    </location>
</feature>
<feature type="turn" evidence="46">
    <location>
        <begin position="878"/>
        <end position="881"/>
    </location>
</feature>
<feature type="strand" evidence="48">
    <location>
        <begin position="934"/>
        <end position="936"/>
    </location>
</feature>
<feature type="strand" evidence="48">
    <location>
        <begin position="940"/>
        <end position="942"/>
    </location>
</feature>
<feature type="turn" evidence="49">
    <location>
        <begin position="944"/>
        <end position="946"/>
    </location>
</feature>
<feature type="strand" evidence="48">
    <location>
        <begin position="948"/>
        <end position="950"/>
    </location>
</feature>
<feature type="strand" evidence="48">
    <location>
        <begin position="953"/>
        <end position="956"/>
    </location>
</feature>
<feature type="strand" evidence="48">
    <location>
        <begin position="958"/>
        <end position="961"/>
    </location>
</feature>
<feature type="turn" evidence="48">
    <location>
        <begin position="964"/>
        <end position="968"/>
    </location>
</feature>
<feature type="turn" evidence="49">
    <location>
        <begin position="969"/>
        <end position="971"/>
    </location>
</feature>
<feature type="strand" evidence="48">
    <location>
        <begin position="974"/>
        <end position="976"/>
    </location>
</feature>
<feature type="strand" evidence="48">
    <location>
        <begin position="978"/>
        <end position="983"/>
    </location>
</feature>
<feature type="turn" evidence="49">
    <location>
        <begin position="985"/>
        <end position="987"/>
    </location>
</feature>
<feature type="strand" evidence="48">
    <location>
        <begin position="989"/>
        <end position="991"/>
    </location>
</feature>
<feature type="strand" evidence="48">
    <location>
        <begin position="995"/>
        <end position="1000"/>
    </location>
</feature>
<feature type="strand" evidence="48">
    <location>
        <begin position="1003"/>
        <end position="1007"/>
    </location>
</feature>
<feature type="strand" evidence="49">
    <location>
        <begin position="1009"/>
        <end position="1011"/>
    </location>
</feature>
<feature type="strand" evidence="47">
    <location>
        <begin position="1013"/>
        <end position="1015"/>
    </location>
</feature>
<feature type="strand" evidence="47">
    <location>
        <begin position="1019"/>
        <end position="1021"/>
    </location>
</feature>
<feature type="strand" evidence="47">
    <location>
        <begin position="1027"/>
        <end position="1029"/>
    </location>
</feature>
<feature type="helix" evidence="47">
    <location>
        <begin position="1030"/>
        <end position="1032"/>
    </location>
</feature>
<feature type="strand" evidence="47">
    <location>
        <begin position="1035"/>
        <end position="1037"/>
    </location>
</feature>
<feature type="strand" evidence="47">
    <location>
        <begin position="1040"/>
        <end position="1043"/>
    </location>
</feature>
<feature type="helix" evidence="47">
    <location>
        <begin position="1044"/>
        <end position="1046"/>
    </location>
</feature>
<feature type="helix" evidence="47">
    <location>
        <begin position="1048"/>
        <end position="1051"/>
    </location>
</feature>
<feature type="turn" evidence="45">
    <location>
        <begin position="1070"/>
        <end position="1072"/>
    </location>
</feature>
<feature type="helix" evidence="45">
    <location>
        <begin position="1078"/>
        <end position="1080"/>
    </location>
</feature>
<feature type="strand" evidence="45">
    <location>
        <begin position="1081"/>
        <end position="1085"/>
    </location>
</feature>
<feature type="strand" evidence="45">
    <location>
        <begin position="1088"/>
        <end position="1091"/>
    </location>
</feature>
<feature type="turn" evidence="45">
    <location>
        <begin position="1092"/>
        <end position="1096"/>
    </location>
</feature>
<feature type="strand" evidence="50">
    <location>
        <begin position="2778"/>
        <end position="2781"/>
    </location>
</feature>
<feature type="turn" evidence="50">
    <location>
        <begin position="2782"/>
        <end position="2785"/>
    </location>
</feature>
<feature type="strand" evidence="50">
    <location>
        <begin position="2786"/>
        <end position="2789"/>
    </location>
</feature>
<feature type="turn" evidence="50">
    <location>
        <begin position="2790"/>
        <end position="2794"/>
    </location>
</feature>
<feature type="strand" evidence="50">
    <location>
        <begin position="2795"/>
        <end position="2797"/>
    </location>
</feature>
<feature type="strand" evidence="51">
    <location>
        <begin position="2800"/>
        <end position="2803"/>
    </location>
</feature>
<feature type="helix" evidence="50">
    <location>
        <begin position="2804"/>
        <end position="2806"/>
    </location>
</feature>
<feature type="helix" evidence="50">
    <location>
        <begin position="2808"/>
        <end position="2810"/>
    </location>
</feature>
<feature type="strand" evidence="51">
    <location>
        <begin position="2813"/>
        <end position="2816"/>
    </location>
</feature>